<protein>
    <recommendedName>
        <fullName>E3 ubiquitin-protein ligase NEDD4-like</fullName>
        <ecNumber evidence="40">2.3.2.26</ecNumber>
        <ecNumber evidence="41">2.3.2.36</ecNumber>
    </recommendedName>
    <alternativeName>
        <fullName>HECT-type E3 ubiquitin transferase NED4L</fullName>
    </alternativeName>
    <alternativeName>
        <fullName>NEDD4.2</fullName>
    </alternativeName>
    <alternativeName>
        <fullName>Nedd4-2</fullName>
    </alternativeName>
</protein>
<evidence type="ECO:0000250" key="1">
    <source>
        <dbReference type="UniProtKB" id="Q8CFI0"/>
    </source>
</evidence>
<evidence type="ECO:0000255" key="2">
    <source>
        <dbReference type="PROSITE-ProRule" id="PRU00041"/>
    </source>
</evidence>
<evidence type="ECO:0000255" key="3">
    <source>
        <dbReference type="PROSITE-ProRule" id="PRU00104"/>
    </source>
</evidence>
<evidence type="ECO:0000255" key="4">
    <source>
        <dbReference type="PROSITE-ProRule" id="PRU00224"/>
    </source>
</evidence>
<evidence type="ECO:0000256" key="5">
    <source>
        <dbReference type="SAM" id="MobiDB-lite"/>
    </source>
</evidence>
<evidence type="ECO:0000269" key="6">
    <source>
    </source>
</evidence>
<evidence type="ECO:0000269" key="7">
    <source>
    </source>
</evidence>
<evidence type="ECO:0000269" key="8">
    <source>
    </source>
</evidence>
<evidence type="ECO:0000269" key="9">
    <source>
    </source>
</evidence>
<evidence type="ECO:0000269" key="10">
    <source>
    </source>
</evidence>
<evidence type="ECO:0000269" key="11">
    <source>
    </source>
</evidence>
<evidence type="ECO:0000269" key="12">
    <source>
    </source>
</evidence>
<evidence type="ECO:0000269" key="13">
    <source>
    </source>
</evidence>
<evidence type="ECO:0000269" key="14">
    <source>
    </source>
</evidence>
<evidence type="ECO:0000269" key="15">
    <source>
    </source>
</evidence>
<evidence type="ECO:0000269" key="16">
    <source>
    </source>
</evidence>
<evidence type="ECO:0000269" key="17">
    <source>
    </source>
</evidence>
<evidence type="ECO:0000269" key="18">
    <source>
    </source>
</evidence>
<evidence type="ECO:0000269" key="19">
    <source>
    </source>
</evidence>
<evidence type="ECO:0000269" key="20">
    <source>
    </source>
</evidence>
<evidence type="ECO:0000269" key="21">
    <source>
    </source>
</evidence>
<evidence type="ECO:0000269" key="22">
    <source>
    </source>
</evidence>
<evidence type="ECO:0000269" key="23">
    <source>
    </source>
</evidence>
<evidence type="ECO:0000269" key="24">
    <source>
    </source>
</evidence>
<evidence type="ECO:0000269" key="25">
    <source>
    </source>
</evidence>
<evidence type="ECO:0000269" key="26">
    <source>
    </source>
</evidence>
<evidence type="ECO:0000269" key="27">
    <source>
    </source>
</evidence>
<evidence type="ECO:0000269" key="28">
    <source>
    </source>
</evidence>
<evidence type="ECO:0000269" key="29">
    <source>
    </source>
</evidence>
<evidence type="ECO:0000269" key="30">
    <source>
    </source>
</evidence>
<evidence type="ECO:0000269" key="31">
    <source>
    </source>
</evidence>
<evidence type="ECO:0000269" key="32">
    <source>
    </source>
</evidence>
<evidence type="ECO:0000269" key="33">
    <source>
    </source>
</evidence>
<evidence type="ECO:0000269" key="34">
    <source>
    </source>
</evidence>
<evidence type="ECO:0000269" key="35">
    <source>
    </source>
</evidence>
<evidence type="ECO:0000269" key="36">
    <source>
    </source>
</evidence>
<evidence type="ECO:0000269" key="37">
    <source>
    </source>
</evidence>
<evidence type="ECO:0000269" key="38">
    <source>
    </source>
</evidence>
<evidence type="ECO:0000269" key="39">
    <source>
    </source>
</evidence>
<evidence type="ECO:0000269" key="40">
    <source>
    </source>
</evidence>
<evidence type="ECO:0000269" key="41">
    <source>
    </source>
</evidence>
<evidence type="ECO:0000303" key="42">
    <source>
    </source>
</evidence>
<evidence type="ECO:0000303" key="43">
    <source>
    </source>
</evidence>
<evidence type="ECO:0000303" key="44">
    <source>
    </source>
</evidence>
<evidence type="ECO:0000303" key="45">
    <source>
    </source>
</evidence>
<evidence type="ECO:0000303" key="46">
    <source>
    </source>
</evidence>
<evidence type="ECO:0000303" key="47">
    <source>
    </source>
</evidence>
<evidence type="ECO:0000303" key="48">
    <source ref="4"/>
</evidence>
<evidence type="ECO:0000303" key="49">
    <source ref="5"/>
</evidence>
<evidence type="ECO:0000305" key="50"/>
<evidence type="ECO:0000305" key="51">
    <source>
    </source>
</evidence>
<evidence type="ECO:0007744" key="52">
    <source>
        <dbReference type="PDB" id="3JVZ"/>
    </source>
</evidence>
<evidence type="ECO:0007744" key="53">
    <source>
        <dbReference type="PDB" id="3JW0"/>
    </source>
</evidence>
<evidence type="ECO:0007744" key="54">
    <source>
    </source>
</evidence>
<evidence type="ECO:0007744" key="55">
    <source>
    </source>
</evidence>
<evidence type="ECO:0007744" key="56">
    <source>
    </source>
</evidence>
<evidence type="ECO:0007744" key="57">
    <source>
    </source>
</evidence>
<evidence type="ECO:0007744" key="58">
    <source>
    </source>
</evidence>
<evidence type="ECO:0007744" key="59">
    <source>
    </source>
</evidence>
<evidence type="ECO:0007744" key="60">
    <source>
    </source>
</evidence>
<evidence type="ECO:0007829" key="61">
    <source>
        <dbReference type="PDB" id="2LAJ"/>
    </source>
</evidence>
<evidence type="ECO:0007829" key="62">
    <source>
        <dbReference type="PDB" id="2LB2"/>
    </source>
</evidence>
<evidence type="ECO:0007829" key="63">
    <source>
        <dbReference type="PDB" id="2NSQ"/>
    </source>
</evidence>
<evidence type="ECO:0007829" key="64">
    <source>
        <dbReference type="PDB" id="2ONI"/>
    </source>
</evidence>
<evidence type="ECO:0007829" key="65">
    <source>
        <dbReference type="PDB" id="3JVZ"/>
    </source>
</evidence>
<evidence type="ECO:0007829" key="66">
    <source>
        <dbReference type="PDB" id="3JW0"/>
    </source>
</evidence>
<evidence type="ECO:0007829" key="67">
    <source>
        <dbReference type="PDB" id="5HPK"/>
    </source>
</evidence>
<evidence type="ECO:0007829" key="68">
    <source>
        <dbReference type="PDB" id="7LP1"/>
    </source>
</evidence>
<evidence type="ECO:0007829" key="69">
    <source>
        <dbReference type="PDB" id="7LP2"/>
    </source>
</evidence>
<evidence type="ECO:0007829" key="70">
    <source>
        <dbReference type="PDB" id="7LP3"/>
    </source>
</evidence>
<evidence type="ECO:0007829" key="71">
    <source>
        <dbReference type="PDB" id="7LP4"/>
    </source>
</evidence>
<sequence length="975" mass="111932">MATGLGEPVYGLSEDEGESRILRVKVVSGIDLAKKDIFGASDPYVKLSLYVADENRELALVQTKTIKKTLNPKWNEEFYFRVNPSNHRLLFEVFDENRLTRDDFLGQVDVPLSHLPTEDPTMERPYTFKDFLLRPRSHKSRVKGFLRLKMAYMPKNGGQDEENSDQRDDMEHGWEVVDSNDSASQHQEELPPPPLPPGWEEKVDNLGRTYYVNHNNRTTQWHRPSLMDVSSESDNNIRQINQEAAHRRFRSRRHISEDLEPEPSEGGDVPEPWETISEEVNIAGDSLGLALPPPPASPGSRTSPQELSEELSRRLQITPDSNGEQFSSLIQREPSSRLRSCSVTDAVAEQGHLPPPSAPAGRARSSTVTGGEEPTPSVAYVHTTPGLPSGWEERKDAKGRTYYVNHNNRTTTWTRPIMQLAEDGASGSATNSNNHLIEPQIRRPRSLSSPTVTLSAPLEGAKDSPVRRAVKDTLSNPQSPQPSPYNSPKPQHKVTQSFLPPGWEMRIAPNGRPFFIDHNTKTTTWEDPRLKFPVHMRSKTSLNPNDLGPLPPGWEERIHLDGRTFYIDHNSKITQWEDPRLQNPAITGPAVPYSREFKQKYDYFRKKLKKPADIPNRFEMKLHRNNIFEESYRRIMSVKRPDVLKARLWIEFESEKGLDYGGVAREWFFLLSKEMFNPYYGLFEYSATDNYTLQINPNSGLCNEDHLSYFTFIGRVAGLAVFHGKLLDGFFIRPFYKMMLGKQITLNDMESVDSEYYNSLKWILENDPTELDLMFCIDEENFGQTYQVDLKPNGSEIMVTNENKREYIDLVIQWRFVNRVQKQMNAFLEGFTELLPIDLIKIFDENELELLMCGLGDVDVNDWRQHSIYKNGYCPNHPVIQWFWKAVLLMDAEKRIRLLQFVTGTSRVPMNGFAELYGSNGPQLFTIEQWGSPEKLPRAHTCFNRLDLPPYETFEDLREKLLMAVENAQGFEGVD</sequence>
<keyword id="KW-0002">3D-structure</keyword>
<keyword id="KW-0007">Acetylation</keyword>
<keyword id="KW-0025">Alternative splicing</keyword>
<keyword id="KW-0963">Cytoplasm</keyword>
<keyword id="KW-0221">Differentiation</keyword>
<keyword id="KW-0903">Direct protein sequencing</keyword>
<keyword id="KW-0225">Disease variant</keyword>
<keyword id="KW-0967">Endosome</keyword>
<keyword id="KW-0333">Golgi apparatus</keyword>
<keyword id="KW-0945">Host-virus interaction</keyword>
<keyword id="KW-0597">Phosphoprotein</keyword>
<keyword id="KW-1267">Proteomics identification</keyword>
<keyword id="KW-1185">Reference proteome</keyword>
<keyword id="KW-0677">Repeat</keyword>
<keyword id="KW-0808">Transferase</keyword>
<keyword id="KW-0832">Ubl conjugation</keyword>
<keyword id="KW-0833">Ubl conjugation pathway</keyword>
<reference key="1">
    <citation type="journal article" date="2001" name="Eur. J. Hum. Genet.">
        <title>NEDD4L on human chromosome 18q21 has multiple forms of transcripts and is a homologue of the mouse Nedd4-2 gene.</title>
        <authorList>
            <person name="Chen H."/>
            <person name="Ross C.A."/>
            <person name="Wang N."/>
            <person name="Huo Y."/>
            <person name="MacKinnon D.F."/>
            <person name="Potash J.B."/>
            <person name="Simpson S.G."/>
            <person name="McMahon F.J."/>
            <person name="DePaulo J.R. Jr."/>
            <person name="McInnis M.G."/>
        </authorList>
    </citation>
    <scope>NUCLEOTIDE SEQUENCE [MRNA] (ISOFORM 4)</scope>
    <scope>ALTERNATIVE SPLICING</scope>
</reference>
<reference key="2">
    <citation type="journal article" date="2003" name="C. R. Biol.">
        <title>Identification of new partners of the epithelial sodium channel alpha subunit.</title>
        <authorList>
            <person name="Malbert-Colas L."/>
            <person name="Nicolas G."/>
            <person name="Galand C."/>
            <person name="Lecomte M.-C."/>
            <person name="Dhermy D."/>
        </authorList>
    </citation>
    <scope>NUCLEOTIDE SEQUENCE [MRNA] (ISOFORM 1)</scope>
    <scope>DOMAIN</scope>
    <source>
        <tissue>Kidney</tissue>
    </source>
</reference>
<reference key="3">
    <citation type="journal article" date="2003" name="Mol. Cell. Endocrinol.">
        <title>Androgens differentially regulate the expression of NEDD4L transcripts in LNCaP human prostate cancer cells.</title>
        <authorList>
            <person name="Qi H."/>
            <person name="Grenier J."/>
            <person name="Fournier A."/>
            <person name="Labrie C."/>
        </authorList>
    </citation>
    <scope>NUCLEOTIDE SEQUENCE [MRNA] (ISOFORMS 4; 6 AND 7)</scope>
    <scope>TISSUE SPECIFICITY</scope>
    <scope>INDUCTION</scope>
    <source>
        <tissue>Prostate</tissue>
    </source>
</reference>
<reference key="4">
    <citation type="submission" date="2001-09" db="EMBL/GenBank/DDBJ databases">
        <title>Homo sapiens NEDD4-like ubiquitin ligase 3.</title>
        <authorList>
            <person name="Okamoto Y."/>
            <person name="Miyazaki K."/>
            <person name="Sakamoto M."/>
            <person name="Kato C."/>
            <person name="Nakagawara A."/>
        </authorList>
    </citation>
    <scope>NUCLEOTIDE SEQUENCE [MRNA] (ISOFORM 5)</scope>
</reference>
<reference key="5">
    <citation type="submission" date="2005-08" db="EMBL/GenBank/DDBJ databases">
        <title>NEDD4L transcripts expressed in human prostate cells.</title>
        <authorList>
            <person name="Qi H."/>
            <person name="Labrie C."/>
        </authorList>
    </citation>
    <scope>NUCLEOTIDE SEQUENCE [MRNA] (ISOFORM 8)</scope>
</reference>
<reference key="6">
    <citation type="journal article" date="2005" name="Nature">
        <title>DNA sequence and analysis of human chromosome 18.</title>
        <authorList>
            <person name="Nusbaum C."/>
            <person name="Zody M.C."/>
            <person name="Borowsky M.L."/>
            <person name="Kamal M."/>
            <person name="Kodira C.D."/>
            <person name="Taylor T.D."/>
            <person name="Whittaker C.A."/>
            <person name="Chang J.L."/>
            <person name="Cuomo C.A."/>
            <person name="Dewar K."/>
            <person name="FitzGerald M.G."/>
            <person name="Yang X."/>
            <person name="Abouelleil A."/>
            <person name="Allen N.R."/>
            <person name="Anderson S."/>
            <person name="Bloom T."/>
            <person name="Bugalter B."/>
            <person name="Butler J."/>
            <person name="Cook A."/>
            <person name="DeCaprio D."/>
            <person name="Engels R."/>
            <person name="Garber M."/>
            <person name="Gnirke A."/>
            <person name="Hafez N."/>
            <person name="Hall J.L."/>
            <person name="Norman C.H."/>
            <person name="Itoh T."/>
            <person name="Jaffe D.B."/>
            <person name="Kuroki Y."/>
            <person name="Lehoczky J."/>
            <person name="Lui A."/>
            <person name="Macdonald P."/>
            <person name="Mauceli E."/>
            <person name="Mikkelsen T.S."/>
            <person name="Naylor J.W."/>
            <person name="Nicol R."/>
            <person name="Nguyen C."/>
            <person name="Noguchi H."/>
            <person name="O'Leary S.B."/>
            <person name="Piqani B."/>
            <person name="Smith C.L."/>
            <person name="Talamas J.A."/>
            <person name="Topham K."/>
            <person name="Totoki Y."/>
            <person name="Toyoda A."/>
            <person name="Wain H.M."/>
            <person name="Young S.K."/>
            <person name="Zeng Q."/>
            <person name="Zimmer A.R."/>
            <person name="Fujiyama A."/>
            <person name="Hattori M."/>
            <person name="Birren B.W."/>
            <person name="Sakaki Y."/>
            <person name="Lander E.S."/>
        </authorList>
    </citation>
    <scope>NUCLEOTIDE SEQUENCE [LARGE SCALE GENOMIC DNA]</scope>
</reference>
<reference key="7">
    <citation type="submission" date="2005-07" db="EMBL/GenBank/DDBJ databases">
        <authorList>
            <person name="Mural R.J."/>
            <person name="Istrail S."/>
            <person name="Sutton G.G."/>
            <person name="Florea L."/>
            <person name="Halpern A.L."/>
            <person name="Mobarry C.M."/>
            <person name="Lippert R."/>
            <person name="Walenz B."/>
            <person name="Shatkay H."/>
            <person name="Dew I."/>
            <person name="Miller J.R."/>
            <person name="Flanigan M.J."/>
            <person name="Edwards N.J."/>
            <person name="Bolanos R."/>
            <person name="Fasulo D."/>
            <person name="Halldorsson B.V."/>
            <person name="Hannenhalli S."/>
            <person name="Turner R."/>
            <person name="Yooseph S."/>
            <person name="Lu F."/>
            <person name="Nusskern D.R."/>
            <person name="Shue B.C."/>
            <person name="Zheng X.H."/>
            <person name="Zhong F."/>
            <person name="Delcher A.L."/>
            <person name="Huson D.H."/>
            <person name="Kravitz S.A."/>
            <person name="Mouchard L."/>
            <person name="Reinert K."/>
            <person name="Remington K.A."/>
            <person name="Clark A.G."/>
            <person name="Waterman M.S."/>
            <person name="Eichler E.E."/>
            <person name="Adams M.D."/>
            <person name="Hunkapiller M.W."/>
            <person name="Myers E.W."/>
            <person name="Venter J.C."/>
        </authorList>
    </citation>
    <scope>NUCLEOTIDE SEQUENCE [LARGE SCALE GENOMIC DNA]</scope>
</reference>
<reference key="8">
    <citation type="journal article" date="2004" name="Genome Res.">
        <title>The status, quality, and expansion of the NIH full-length cDNA project: the Mammalian Gene Collection (MGC).</title>
        <authorList>
            <consortium name="The MGC Project Team"/>
        </authorList>
    </citation>
    <scope>NUCLEOTIDE SEQUENCE [LARGE SCALE MRNA] (ISOFORM 2)</scope>
    <scope>NUCLEOTIDE SEQUENCE [LARGE SCALE MRNA] OF 101-975 (ISOFORM 5)</scope>
    <source>
        <tissue>Skin</tissue>
        <tissue>Uterus</tissue>
    </source>
</reference>
<reference key="9">
    <citation type="journal article" date="1997" name="DNA Res.">
        <title>Prediction of the coding sequences of unidentified human genes. VIII. 78 new cDNA clones from brain which code for large proteins in vitro.</title>
        <authorList>
            <person name="Ishikawa K."/>
            <person name="Nagase T."/>
            <person name="Nakajima D."/>
            <person name="Seki N."/>
            <person name="Ohira M."/>
            <person name="Miyajima N."/>
            <person name="Tanaka A."/>
            <person name="Kotani H."/>
            <person name="Nomura N."/>
            <person name="Ohara O."/>
        </authorList>
    </citation>
    <scope>NUCLEOTIDE SEQUENCE [MRNA] (ISOFORM 8)</scope>
    <source>
        <tissue>Brain</tissue>
    </source>
</reference>
<reference key="10">
    <citation type="journal article" date="2007" name="BMC Genomics">
        <title>The full-ORF clone resource of the German cDNA consortium.</title>
        <authorList>
            <person name="Bechtel S."/>
            <person name="Rosenfelder H."/>
            <person name="Duda A."/>
            <person name="Schmidt C.P."/>
            <person name="Ernst U."/>
            <person name="Wellenreuther R."/>
            <person name="Mehrle A."/>
            <person name="Schuster C."/>
            <person name="Bahr A."/>
            <person name="Bloecker H."/>
            <person name="Heubner D."/>
            <person name="Hoerlein A."/>
            <person name="Michel G."/>
            <person name="Wedler H."/>
            <person name="Koehrer K."/>
            <person name="Ottenwaelder B."/>
            <person name="Poustka A."/>
            <person name="Wiemann S."/>
            <person name="Schupp I."/>
        </authorList>
    </citation>
    <scope>NUCLEOTIDE SEQUENCE [MRNA] OF 52-975 (ISOFORM 3)</scope>
    <source>
        <tissue>Testis</tissue>
    </source>
</reference>
<reference key="11">
    <citation type="journal article" date="2005" name="J. Biol. Chem.">
        <title>14-3-3 proteins modulate the expression of epithelial Na+ channels by phosphorylation-dependent interaction with Nedd4-2 ubiquitin ligase.</title>
        <authorList>
            <person name="Ichimura T."/>
            <person name="Yamamura H."/>
            <person name="Sasamoto K."/>
            <person name="Tominaga Y."/>
            <person name="Taoka M."/>
            <person name="Kakiuchi K."/>
            <person name="Shinkawa T."/>
            <person name="Takahashi N."/>
            <person name="Shimada S."/>
            <person name="Isobe T."/>
        </authorList>
    </citation>
    <scope>PROTEIN SEQUENCE OF 448-462</scope>
    <scope>INTERACTION WITH YWHAB; YWHAG; YWHAE; YWHAQ AND YWHAH</scope>
    <scope>PHOSPHORYLATION AT SER-448</scope>
    <scope>MUTAGENESIS OF SER-448</scope>
    <scope>IDENTIFICATION BY MASS SPECTROMETRY</scope>
</reference>
<reference key="12">
    <citation type="journal article" date="2000" name="Mol. Cell. Biol.">
        <title>Latent membrane protein 2A of Epstein-Barr virus binds WW domain E3 protein-ubiquitin ligases that ubiquitinate B-cell tyrosine kinases.</title>
        <authorList>
            <person name="Winberg G."/>
            <person name="Matskova L."/>
            <person name="Chen F."/>
            <person name="Plant P."/>
            <person name="Rotin D."/>
            <person name="Gish G."/>
            <person name="Ingham R."/>
            <person name="Ernberg I."/>
            <person name="Pawson T."/>
        </authorList>
    </citation>
    <scope>INTERACTION WITH EPSTEIN-BARR VIRUS LMP2A</scope>
</reference>
<reference key="13">
    <citation type="journal article" date="2001" name="J. Biol. Chem.">
        <title>The Nedd4-like protein KIAA0439 is a potential regulator of the epithelial sodium channel.</title>
        <authorList>
            <person name="Harvey K.F."/>
            <person name="Dinudom A."/>
            <person name="Cook D.I."/>
            <person name="Kumar S."/>
        </authorList>
    </citation>
    <scope>DOMAIN</scope>
</reference>
<reference key="14">
    <citation type="journal article" date="2002" name="J. Biol. Chem.">
        <title>Serum and glucocorticoid-regulated kinase modulates Nedd4-2-mediated inhibition of the epithelial Na+ channel.</title>
        <authorList>
            <person name="Snyder P.M."/>
            <person name="Olson D.R."/>
            <person name="Thomas B.C."/>
        </authorList>
    </citation>
    <scope>INTERACTION WITH SGK1</scope>
    <scope>DOMAIN</scope>
    <scope>PHOSPHORYLATION</scope>
</reference>
<reference key="15">
    <citation type="journal article" date="2002" name="J. Biol. Chem.">
        <title>N4WBP5, a potential target for ubiquitination by the Nedd4 family of proteins, is a novel Golgi-associated protein.</title>
        <authorList>
            <person name="Harvey K.F."/>
            <person name="Shearwin-Whyatt L.M."/>
            <person name="Fotia A."/>
            <person name="Parton R.G."/>
            <person name="Kumar S."/>
        </authorList>
    </citation>
    <scope>ACTIVITY REGULATION</scope>
    <scope>INTERACTION WITH NDFIP1</scope>
</reference>
<reference key="16">
    <citation type="journal article" date="2003" name="J. Neurochem.">
        <title>Regulation of the glutamate transporter EAAT1 by the ubiquitin ligase Nedd4-2 and the serum and glucocorticoid-inducible kinase isoforms SGK1/3 and protein kinase B.</title>
        <authorList>
            <person name="Boehmer C."/>
            <person name="Henke G."/>
            <person name="Schniepp R."/>
            <person name="Palmada M."/>
            <person name="Rothstein J.D."/>
            <person name="Broeer S."/>
            <person name="Lang F."/>
        </authorList>
    </citation>
    <scope>FUNCTION</scope>
</reference>
<reference key="17">
    <citation type="journal article" date="2004" name="Circ. Res.">
        <title>Cardiac voltage-gated sodium channel Nav1.5 is regulated by Nedd4-2 mediated ubiquitination.</title>
        <authorList>
            <person name="van Bemmelen M.X."/>
            <person name="Rougier J.-S."/>
            <person name="Gavillet B."/>
            <person name="Apotheloz F."/>
            <person name="Daidie D."/>
            <person name="Tateyama M."/>
            <person name="Rivolta I."/>
            <person name="Thomas M.A."/>
            <person name="Kass R.S."/>
            <person name="Staub O."/>
            <person name="Abriel H."/>
        </authorList>
    </citation>
    <scope>FUNCTION</scope>
    <scope>MUTAGENESIS OF CYS-942</scope>
    <scope>INTERACTION WITH SCN5A</scope>
</reference>
<reference key="18">
    <citation type="journal article" date="2004" name="J. Biol. Chem.">
        <title>Nedd4-2 functionally interacts with ClC-5: involvement in constitutive albumin endocytosis in proximal tubule cells.</title>
        <authorList>
            <person name="Hryciw D.H."/>
            <person name="Ekberg J."/>
            <person name="Lee A."/>
            <person name="Lensink I.L."/>
            <person name="Kumar S."/>
            <person name="Guggino W.B."/>
            <person name="Cook D.I."/>
            <person name="Pollock C.A."/>
            <person name="Poronnik P."/>
        </authorList>
    </citation>
    <scope>FUNCTION</scope>
    <scope>INTERACTION WITH CLCN5</scope>
    <scope>INDUCTION</scope>
</reference>
<reference key="19">
    <citation type="journal article" date="2004" name="J. Biol. Chem.">
        <title>cAMP and serum and glucocorticoid-inducible kinase (SGK) regulate the epithelial Na(+) channel through convergent phosphorylation of Nedd4-2.</title>
        <authorList>
            <person name="Snyder P.M."/>
            <person name="Olson D.R."/>
            <person name="Kabra R."/>
            <person name="Zhou R."/>
            <person name="Steines J.C."/>
        </authorList>
    </citation>
    <scope>PHOSPHORYLATION AT SER-342; THR-367 AND SER-448</scope>
</reference>
<reference key="20">
    <citation type="journal article" date="2004" name="J. Cell. Physiol.">
        <title>Regulation of the voltage gated K+ channel Kv1.3 by the ubiquitin ligase Nedd4-2 and the serum and glucocorticoid inducible kinase SGK1.</title>
        <authorList>
            <person name="Henke G."/>
            <person name="Maier G."/>
            <person name="Wallisch S."/>
            <person name="Boehmer C."/>
            <person name="Lang F."/>
        </authorList>
    </citation>
    <scope>FUNCTION</scope>
</reference>
<reference key="21">
    <citation type="journal article" date="2005" name="Am. J. Physiol.">
        <title>Molecular determinants of voltage-gated sodium channel regulation by the Nedd4/Nedd4-like proteins.</title>
        <authorList>
            <person name="Rougier J.-S."/>
            <person name="van Bemmelen M.X."/>
            <person name="Bruce M.C."/>
            <person name="Jespersen T."/>
            <person name="Gavillet B."/>
            <person name="Apotheloz F."/>
            <person name="Cordonier S."/>
            <person name="Staub O."/>
            <person name="Rotin D."/>
            <person name="Abriel H."/>
        </authorList>
    </citation>
    <scope>INTERACTION WITH SCN2A; SCN3A AND SCN5A</scope>
</reference>
<reference key="22">
    <citation type="journal article" date="2005" name="Biochem. J.">
        <title>NEDD4-2 (neural precursor cell expressed, developmentally down-regulated 4-2) negatively regulates TGF-beta (transforming growth factor-beta) signalling by inducing ubiquitin-mediated degradation of Smad2 and TGF-beta type I receptor.</title>
        <authorList>
            <person name="Kuratomi G."/>
            <person name="Komuro A."/>
            <person name="Goto K."/>
            <person name="Shinozaki M."/>
            <person name="Miyazawa K."/>
            <person name="Miyazono K."/>
            <person name="Imamura T."/>
        </authorList>
    </citation>
    <scope>FUNCTION</scope>
    <scope>INTERACTION WITH SMAD2; SMAD3; SMAD6 AND SMAD7</scope>
    <scope>SUBCELLULAR LOCATION</scope>
    <scope>TISSUE SPECIFICITY</scope>
</reference>
<reference key="23">
    <citation type="journal article" date="2005" name="J. Biol. Chem.">
        <title>Nedd4-2 phosphorylation induces serum and glucocorticoid-regulated kinase (SGK) ubiquitination and degradation.</title>
        <authorList>
            <person name="Zhou R."/>
            <person name="Snyder P.M."/>
        </authorList>
    </citation>
    <scope>FUNCTION</scope>
</reference>
<reference key="24">
    <citation type="journal article" date="2006" name="Cell">
        <title>Global, in vivo, and site-specific phosphorylation dynamics in signaling networks.</title>
        <authorList>
            <person name="Olsen J.V."/>
            <person name="Blagoev B."/>
            <person name="Gnad F."/>
            <person name="Macek B."/>
            <person name="Kumar C."/>
            <person name="Mortensen P."/>
            <person name="Mann M."/>
        </authorList>
    </citation>
    <scope>PHOSPHORYLATION [LARGE SCALE ANALYSIS] AT SER-479</scope>
    <scope>IDENTIFICATION BY MASS SPECTROMETRY [LARGE SCALE ANALYSIS]</scope>
    <source>
        <tissue>Cervix carcinoma</tissue>
    </source>
</reference>
<reference key="25">
    <citation type="journal article" date="2008" name="J. Biol. Chem.">
        <title>The ubiquitin-protein ligase Nedd4-2 differentially interacts with and regulates members of the Tweety family of chloride ion channels.</title>
        <authorList>
            <person name="He Y."/>
            <person name="Hryciw D.H."/>
            <person name="Carroll M.L."/>
            <person name="Myers S.A."/>
            <person name="Whitbread A.K."/>
            <person name="Kumar S."/>
            <person name="Poronnik P."/>
            <person name="Hooper J.D."/>
        </authorList>
    </citation>
    <scope>FUNCTION</scope>
    <scope>INTERACTION WITH TTYH2 AND TTYH3</scope>
</reference>
<reference key="26">
    <citation type="journal article" date="2008" name="J. Biol. Chem.">
        <title>Nedd4 family-interacting protein 1 (Ndfip1) is required for the exosomal secretion of Nedd4 family proteins.</title>
        <authorList>
            <person name="Putz U."/>
            <person name="Howitt J."/>
            <person name="Lackovic J."/>
            <person name="Foot N."/>
            <person name="Kumar S."/>
            <person name="Silke J."/>
            <person name="Tan S.S."/>
        </authorList>
    </citation>
    <scope>SUBCELLULAR LOCATION</scope>
</reference>
<reference key="27">
    <citation type="journal article" date="2008" name="Mol. Cell">
        <title>Kinase-selective enrichment enables quantitative phosphoproteomics of the kinome across the cell cycle.</title>
        <authorList>
            <person name="Daub H."/>
            <person name="Olsen J.V."/>
            <person name="Bairlein M."/>
            <person name="Gnad F."/>
            <person name="Oppermann F.S."/>
            <person name="Korner R."/>
            <person name="Greff Z."/>
            <person name="Keri G."/>
            <person name="Stemmann O."/>
            <person name="Mann M."/>
        </authorList>
    </citation>
    <scope>IDENTIFICATION BY MASS SPECTROMETRY [LARGE SCALE ANALYSIS]</scope>
    <source>
        <tissue>Cervix carcinoma</tissue>
    </source>
</reference>
<reference key="28">
    <citation type="journal article" date="2008" name="Proc. Natl. Acad. Sci. U.S.A.">
        <title>A quantitative atlas of mitotic phosphorylation.</title>
        <authorList>
            <person name="Dephoure N."/>
            <person name="Zhou C."/>
            <person name="Villen J."/>
            <person name="Beausoleil S.A."/>
            <person name="Bakalarski C.E."/>
            <person name="Elledge S.J."/>
            <person name="Gygi S.P."/>
        </authorList>
    </citation>
    <scope>PHOSPHORYLATION [LARGE SCALE ANALYSIS] AT THR-318; SER-342; SER-446; SER-449; SER-464; SER-479 AND SER-487</scope>
    <scope>IDENTIFICATION BY MASS SPECTROMETRY [LARGE SCALE ANALYSIS]</scope>
    <source>
        <tissue>Cervix carcinoma</tissue>
    </source>
</reference>
<reference key="29">
    <citation type="journal article" date="2009" name="Anal. Chem.">
        <title>Lys-N and trypsin cover complementary parts of the phosphoproteome in a refined SCX-based approach.</title>
        <authorList>
            <person name="Gauci S."/>
            <person name="Helbig A.O."/>
            <person name="Slijper M."/>
            <person name="Krijgsveld J."/>
            <person name="Heck A.J."/>
            <person name="Mohammed S."/>
        </authorList>
    </citation>
    <scope>IDENTIFICATION BY MASS SPECTROMETRY [LARGE SCALE ANALYSIS]</scope>
</reference>
<reference key="30">
    <citation type="journal article" date="2009" name="Biochem. Biophys. Res. Commun.">
        <title>Identification of NPC2 protein as interaction molecule with C2 domain of human Nedd4L.</title>
        <authorList>
            <person name="Araki N."/>
            <person name="Ishigami T."/>
            <person name="Ushio H."/>
            <person name="Minegishi S."/>
            <person name="Umemura M."/>
            <person name="Miyagi Y."/>
            <person name="Aoki I."/>
            <person name="Morinaga H."/>
            <person name="Tamura K."/>
            <person name="Toya Y."/>
            <person name="Uchino K."/>
            <person name="Umemura S."/>
        </authorList>
    </citation>
    <scope>INTERACTION WITH NPC2</scope>
    <scope>TISSUE SPECIFICITY</scope>
</reference>
<reference key="31">
    <citation type="journal article" date="2009" name="EMBO Rep.">
        <title>Control of the activity of WW-HECT domain E3 ubiquitin ligases by NDFIP proteins.</title>
        <authorList>
            <person name="Mund T."/>
            <person name="Pelham H.R."/>
        </authorList>
    </citation>
    <scope>ACTIVATION BY NDFIP1 AND NDFIP2</scope>
    <scope>AUTOUBIQUITINATION</scope>
</reference>
<reference key="32">
    <citation type="journal article" date="2009" name="J. Biol. Chem.">
        <title>Down-regulation of active ACK1 is mediated by association with the E3 ubiquitin ligase Nedd4-2.</title>
        <authorList>
            <person name="Chan W."/>
            <person name="Tian R."/>
            <person name="Lee Y.-F."/>
            <person name="Sit S.T."/>
            <person name="Lim L."/>
            <person name="Manser E."/>
        </authorList>
    </citation>
    <scope>FUNCTION AS A UBIQUITIN-PROTEIN LIGASE FOR TNK2</scope>
    <scope>INTERACTION WITH TNK2</scope>
</reference>
<reference key="33">
    <citation type="journal article" date="2009" name="Sci. Signal.">
        <title>Quantitative phosphoproteomic analysis of T cell receptor signaling reveals system-wide modulation of protein-protein interactions.</title>
        <authorList>
            <person name="Mayya V."/>
            <person name="Lundgren D.H."/>
            <person name="Hwang S.-I."/>
            <person name="Rezaul K."/>
            <person name="Wu L."/>
            <person name="Eng J.K."/>
            <person name="Rodionov V."/>
            <person name="Han D.K."/>
        </authorList>
    </citation>
    <scope>PHOSPHORYLATION [LARGE SCALE ANALYSIS] AT SER-446</scope>
    <scope>IDENTIFICATION BY MASS SPECTROMETRY [LARGE SCALE ANALYSIS]</scope>
    <source>
        <tissue>Leukemic T-cell</tissue>
    </source>
</reference>
<reference key="34">
    <citation type="journal article" date="2010" name="J. Biol. Chem.">
        <title>Serum and glucocorticoid-induced kinase (SGK) 1 and the epithelial sodium channel are regulated by multiple with no lysine (WNK) family members.</title>
        <authorList>
            <person name="Heise C.J."/>
            <person name="Xu B.E."/>
            <person name="Deaton S.L."/>
            <person name="Cha S.K."/>
            <person name="Cheng C.J."/>
            <person name="Earnest S."/>
            <person name="Sengupta S."/>
            <person name="Juang Y.C."/>
            <person name="Stippec S."/>
            <person name="Xu Y."/>
            <person name="Zhao Y."/>
            <person name="Huang C.L."/>
            <person name="Cobb M.H."/>
        </authorList>
    </citation>
    <scope>PHOSPHORYLATION AT SER-342 AND SER-449</scope>
    <scope>INTERACTION WITH WNK1</scope>
</reference>
<reference key="35">
    <citation type="journal article" date="2010" name="Mol. Cell. Biol.">
        <title>HECT E3 ubiquitin ligase Nedd4-1 ubiquitinates ACK and regulates epidermal growth factor (EGF)-induced degradation of EGF receptor and ACK.</title>
        <authorList>
            <person name="Lin Q."/>
            <person name="Wang J."/>
            <person name="Childress C."/>
            <person name="Sudol M."/>
            <person name="Carey D.J."/>
            <person name="Yang W."/>
        </authorList>
    </citation>
    <scope>INTERACTION WITH TNK2</scope>
</reference>
<reference key="36">
    <citation type="journal article" date="2010" name="PLoS ONE">
        <title>Interaction of serum- and glucocorticoid regulated kinase 1 (SGK1) with the WW-domains of Nedd4-2 is required for epithelial sodium channel regulation.</title>
        <authorList>
            <person name="Wiemuth D."/>
            <person name="Lott J.S."/>
            <person name="Ly K."/>
            <person name="Ke Y."/>
            <person name="Teesdale-Spittle P."/>
            <person name="Snyder P.M."/>
            <person name="McDonald F.J."/>
        </authorList>
    </citation>
    <scope>PHOSPHORYLATION BY SGK1</scope>
    <scope>INTERACTION WITH SGK1</scope>
</reference>
<reference key="37">
    <citation type="journal article" date="2010" name="Sci. Signal.">
        <title>Quantitative phosphoproteomics reveals widespread full phosphorylation site occupancy during mitosis.</title>
        <authorList>
            <person name="Olsen J.V."/>
            <person name="Vermeulen M."/>
            <person name="Santamaria A."/>
            <person name="Kumar C."/>
            <person name="Miller M.L."/>
            <person name="Jensen L.J."/>
            <person name="Gnad F."/>
            <person name="Cox J."/>
            <person name="Jensen T.S."/>
            <person name="Nigg E.A."/>
            <person name="Brunak S."/>
            <person name="Mann M."/>
        </authorList>
    </citation>
    <scope>PHOSPHORYLATION [LARGE SCALE ANALYSIS] AT SER-479 AND SER-483</scope>
    <scope>IDENTIFICATION BY MASS SPECTROMETRY [LARGE SCALE ANALYSIS]</scope>
    <source>
        <tissue>Cervix carcinoma</tissue>
    </source>
</reference>
<reference key="38">
    <citation type="journal article" date="2011" name="BMC Syst. Biol.">
        <title>Initial characterization of the human central proteome.</title>
        <authorList>
            <person name="Burkard T.R."/>
            <person name="Planyavsky M."/>
            <person name="Kaupe I."/>
            <person name="Breitwieser F.P."/>
            <person name="Buerckstuemmer T."/>
            <person name="Bennett K.L."/>
            <person name="Superti-Furga G."/>
            <person name="Colinge J."/>
        </authorList>
    </citation>
    <scope>IDENTIFICATION BY MASS SPECTROMETRY [LARGE SCALE ANALYSIS]</scope>
</reference>
<reference key="39">
    <citation type="journal article" date="2011" name="Sci. Signal.">
        <title>System-wide temporal characterization of the proteome and phosphoproteome of human embryonic stem cell differentiation.</title>
        <authorList>
            <person name="Rigbolt K.T."/>
            <person name="Prokhorova T.A."/>
            <person name="Akimov V."/>
            <person name="Henningsen J."/>
            <person name="Johansen P.T."/>
            <person name="Kratchmarova I."/>
            <person name="Kassem M."/>
            <person name="Mann M."/>
            <person name="Olsen J.V."/>
            <person name="Blagoev B."/>
        </authorList>
    </citation>
    <scope>PHOSPHORYLATION [LARGE SCALE ANALYSIS] AT SER-479; SER-483 AND SER-487</scope>
    <scope>IDENTIFICATION BY MASS SPECTROMETRY [LARGE SCALE ANALYSIS]</scope>
</reference>
<reference key="40">
    <citation type="journal article" date="2012" name="Heart Rhythm">
        <title>Deubiquitylating enzyme USP2 counteracts Nedd4-2-mediated downregulation of KCNQ1 potassium channels.</title>
        <authorList>
            <person name="Krzystanek K."/>
            <person name="Rasmussen H.B."/>
            <person name="Grunnet M."/>
            <person name="Staub O."/>
            <person name="Olesen S.P."/>
            <person name="Abriel H."/>
            <person name="Jespersen T."/>
        </authorList>
    </citation>
    <scope>INTERACTION WITH KCNQ1</scope>
</reference>
<reference key="41">
    <citation type="journal article" date="2012" name="PLoS ONE">
        <title>Mammalian alpha arrestins link activated seven transmembrane receptors to Nedd4 family e3 ubiquitin ligases and interact with beta arrestins.</title>
        <authorList>
            <person name="Shea F.F."/>
            <person name="Rowell J.L."/>
            <person name="Li Y."/>
            <person name="Chang T.H."/>
            <person name="Alvarez C.E."/>
        </authorList>
    </citation>
    <scope>INTERACTION WITH ARRDC4</scope>
</reference>
<reference key="42">
    <citation type="journal article" date="2012" name="Proc. Natl. Acad. Sci. U.S.A.">
        <title>N-terminal acetylome analyses and functional insights of the N-terminal acetyltransferase NatB.</title>
        <authorList>
            <person name="Van Damme P."/>
            <person name="Lasa M."/>
            <person name="Polevoda B."/>
            <person name="Gazquez C."/>
            <person name="Elosegui-Artola A."/>
            <person name="Kim D.S."/>
            <person name="De Juan-Pardo E."/>
            <person name="Demeyer K."/>
            <person name="Hole K."/>
            <person name="Larrea E."/>
            <person name="Timmerman E."/>
            <person name="Prieto J."/>
            <person name="Arnesen T."/>
            <person name="Sherman F."/>
            <person name="Gevaert K."/>
            <person name="Aldabe R."/>
        </authorList>
    </citation>
    <scope>ACETYLATION [LARGE SCALE ANALYSIS] AT ALA-2</scope>
    <scope>CLEAVAGE OF INITIATOR METHIONINE [LARGE SCALE ANALYSIS]</scope>
    <scope>IDENTIFICATION BY MASS SPECTROMETRY [LARGE SCALE ANALYSIS]</scope>
</reference>
<reference key="43">
    <citation type="journal article" date="2013" name="J. Biol. Chem.">
        <title>Cellular localization and characterization of cytosolic binding partners for Gla domain-containing proteins PRRG4 and PRRG2.</title>
        <authorList>
            <person name="Yazicioglu M.N."/>
            <person name="Monaldini L."/>
            <person name="Chu K."/>
            <person name="Khazi F.R."/>
            <person name="Murphy S.L."/>
            <person name="Huang H."/>
            <person name="Margaritis P."/>
            <person name="High K.A."/>
        </authorList>
    </citation>
    <scope>INTERACTION WITH PRRG4</scope>
</reference>
<reference key="44">
    <citation type="journal article" date="2013" name="J. Dermatol. Sci.">
        <title>SYT14L, especially its C2 domain, is involved in regulating melanocyte differentiation.</title>
        <authorList>
            <person name="Yoo J.C."/>
            <person name="Lim T.Y."/>
            <person name="Park J.S."/>
            <person name="Hah Y.S."/>
            <person name="Park N."/>
            <person name="Hong S.G."/>
            <person name="Park J.Y."/>
            <person name="Yoon T.J."/>
        </authorList>
    </citation>
    <scope>FUNCTION</scope>
    <scope>TISSUE SPECIFICITY</scope>
</reference>
<reference key="45">
    <citation type="journal article" date="2013" name="J. Proteome Res.">
        <title>Toward a comprehensive characterization of a human cancer cell phosphoproteome.</title>
        <authorList>
            <person name="Zhou H."/>
            <person name="Di Palma S."/>
            <person name="Preisinger C."/>
            <person name="Peng M."/>
            <person name="Polat A.N."/>
            <person name="Heck A.J."/>
            <person name="Mohammed S."/>
        </authorList>
    </citation>
    <scope>PHOSPHORYLATION [LARGE SCALE ANALYSIS] AT SER-312; THR-318; SER-448; SER-475; SER-479 AND SER-483</scope>
    <scope>IDENTIFICATION BY MASS SPECTROMETRY [LARGE SCALE ANALYSIS]</scope>
    <source>
        <tissue>Cervix carcinoma</tissue>
        <tissue>Erythroleukemia</tissue>
    </source>
</reference>
<reference key="46">
    <citation type="journal article" date="2014" name="J. Proteomics">
        <title>An enzyme assisted RP-RPLC approach for in-depth analysis of human liver phosphoproteome.</title>
        <authorList>
            <person name="Bian Y."/>
            <person name="Song C."/>
            <person name="Cheng K."/>
            <person name="Dong M."/>
            <person name="Wang F."/>
            <person name="Huang J."/>
            <person name="Sun D."/>
            <person name="Wang L."/>
            <person name="Ye M."/>
            <person name="Zou H."/>
        </authorList>
    </citation>
    <scope>IDENTIFICATION BY MASS SPECTROMETRY [LARGE SCALE ANALYSIS]</scope>
    <source>
        <tissue>Liver</tissue>
    </source>
</reference>
<reference key="47">
    <citation type="journal article" date="2015" name="Biochem. J.">
        <title>Regulation of the human ether-a-go-go-related gene (hERG) potassium channel by Nedd4 family interacting proteins (Ndfips).</title>
        <authorList>
            <person name="Kang Y."/>
            <person name="Guo J."/>
            <person name="Yang T."/>
            <person name="Li W."/>
            <person name="Zhang S."/>
        </authorList>
    </citation>
    <scope>FUNCTION</scope>
    <scope>ACTIVITY REGULATION</scope>
    <scope>INTERACTION WITH NDFIP1 AND NDFIP2</scope>
    <scope>SUBCELLULAR LOCATION</scope>
</reference>
<reference key="48">
    <citation type="journal article" date="2015" name="J. Biol. Chem.">
        <title>Nedd4 family interacting protein 1 (Ndfip1) is required for ubiquitination and nuclear trafficking of BRCA1-associated ATM activator 1 (BRAT1) during the DNA damage response.</title>
        <authorList>
            <person name="Low L.H."/>
            <person name="Chow Y.L."/>
            <person name="Li Y."/>
            <person name="Goh C.P."/>
            <person name="Putz U."/>
            <person name="Silke J."/>
            <person name="Ouchi T."/>
            <person name="Howitt J."/>
            <person name="Tan S.S."/>
        </authorList>
    </citation>
    <scope>FUNCTION IN UBIQUITINATION OF BRAT1</scope>
</reference>
<reference key="49">
    <citation type="journal article" date="2016" name="Biochemistry">
        <title>Regulation of Itch and Nedd4 E3 Ligase Activity and Degradation by LRAD3.</title>
        <authorList>
            <person name="Noyes N.C."/>
            <person name="Hampton B."/>
            <person name="Migliorini M."/>
            <person name="Strickland D.K."/>
        </authorList>
    </citation>
    <scope>INTERACTION WITH LDLRAD3</scope>
</reference>
<reference key="50">
    <citation type="journal article" date="2016" name="J. Biol. Chem.">
        <title>Ubiquitin-specific Protease 36 (USP36) Controls Neuronal Precursor Cell-expressed Developmentally Down-regulated 4-2 (Nedd4-2) Actions over the Neurotrophin Receptor TrkA and Potassium Voltage-gated Channels 7.2/3 (Kv7.2/3).</title>
        <authorList>
            <person name="Anta B."/>
            <person name="Martin-Rodriguez C."/>
            <person name="Gomis-Perez C."/>
            <person name="Calvo L."/>
            <person name="Lopez-Benito S."/>
            <person name="Calderon-Garcia A.A."/>
            <person name="Vicente-Garcia C."/>
            <person name="Villarroel A."/>
            <person name="Arevalo J.C."/>
        </authorList>
    </citation>
    <scope>FUNCTION</scope>
    <scope>INTERACTION WITH USP36</scope>
    <scope>DEUBIQUITINATION BY USP36</scope>
    <scope>MUTAGENESIS OF CYS-942</scope>
</reference>
<reference key="51">
    <citation type="journal article" date="2016" name="Nat. Genet.">
        <title>Mutations in the HECT domain of NEDD4L lead to AKT-mTOR pathway deregulation and cause periventricular nodular heterotopia.</title>
        <authorList>
            <consortium name="Deciphering Developmental Disorders study"/>
            <person name="Broix L."/>
            <person name="Jagline H."/>
            <person name="Ivanova L.E."/>
            <person name="Schmucker S."/>
            <person name="Drouot N."/>
            <person name="Clayton-Smith J."/>
            <person name="Pagnamenta A.T."/>
            <person name="Metcalfe K.A."/>
            <person name="Isidor B."/>
            <person name="Louvier U.W."/>
            <person name="Poduri A."/>
            <person name="Taylor J.C."/>
            <person name="Tilly P."/>
            <person name="Poirier K."/>
            <person name="Saillour Y."/>
            <person name="Lebrun N."/>
            <person name="Stemmelen T."/>
            <person name="Rudolf G."/>
            <person name="Muraca G."/>
            <person name="Saintpierre B."/>
            <person name="Elmorjani A."/>
            <person name="Moise M."/>
            <person name="Weirauch N.B."/>
            <person name="Guerrini R."/>
            <person name="Boland A."/>
            <person name="Olaso R."/>
            <person name="Masson C."/>
            <person name="Tripathy R."/>
            <person name="Keays D."/>
            <person name="Beldjord C."/>
            <person name="Nguyen L."/>
            <person name="Godin J."/>
            <person name="Kini U."/>
            <person name="Nischke P."/>
            <person name="Deleuze J.F."/>
            <person name="Bahi-Buisson N."/>
            <person name="Sumara I."/>
            <person name="Hinckelmann M.V."/>
            <person name="Chelly J."/>
        </authorList>
    </citation>
    <scope>FUNCTION</scope>
    <scope>SUBCELLULAR LOCATION</scope>
    <scope>INVOLVEMENT IN PVNH7</scope>
    <scope>VARIANTS PVNH7 CYS-679; HIS-694; LYS-893 AND GLN-897</scope>
    <scope>CHARACTERIZATION OF VARIANTS PVNH7 HIS-694; LYS-893 AND GLN-897</scope>
</reference>
<reference key="52">
    <citation type="journal article" date="2017" name="Cell Cycle">
        <title>ULK1 ubiquitylation is regulated by phosphorylation on its carboxy terminus.</title>
        <authorList>
            <person name="Nazio F."/>
            <person name="Carinci M."/>
            <person name="Cecconi F."/>
        </authorList>
    </citation>
    <scope>FUNCTION</scope>
    <scope>CATALYTIC ACTIVITY</scope>
</reference>
<reference key="53">
    <citation type="journal article" date="2020" name="Cell Death Dis.">
        <title>NEDD4L downregulates autophagy and cell growth by modulating ULK1 and a glutamine transporter.</title>
        <authorList>
            <person name="Lee D.E."/>
            <person name="Yoo J.E."/>
            <person name="Kim J."/>
            <person name="Kim S."/>
            <person name="Kim S."/>
            <person name="Lee H."/>
            <person name="Cheong H."/>
        </authorList>
    </citation>
    <scope>FUNCTION</scope>
</reference>
<reference key="54">
    <citation type="journal article" date="2021" name="Nat. Commun.">
        <title>E3 ligase Nedd4l promotes antiviral innate immunity by catalyzing K29-linked cysteine ubiquitination of TRAF3.</title>
        <authorList>
            <person name="Gao P."/>
            <person name="Ma X."/>
            <person name="Yuan M."/>
            <person name="Yi Y."/>
            <person name="Liu G."/>
            <person name="Wen M."/>
            <person name="Jiang W."/>
            <person name="Ji R."/>
            <person name="Zhu L."/>
            <person name="Tang Z."/>
            <person name="Yu Q."/>
            <person name="Xu J."/>
            <person name="Yang R."/>
            <person name="Xia S."/>
            <person name="Yang M."/>
            <person name="Pan J."/>
            <person name="Yuan H."/>
            <person name="An H."/>
        </authorList>
    </citation>
    <scope>FUNCTION</scope>
    <scope>CATALYTIC ACTIVITY</scope>
</reference>
<reference key="55">
    <citation type="journal article" date="2004" name="Am. J. Physiol.">
        <title>A naturally occurring human Nedd4-2 variant displays impaired ENaC regulation in Xenopus laevis oocytes.</title>
        <authorList>
            <person name="Fouladkou F."/>
            <person name="Alikhani-Koopaei R."/>
            <person name="Vogt B."/>
            <person name="Flores S.Y."/>
            <person name="Malbert-Colas L."/>
            <person name="Lecomte M.-C."/>
            <person name="Loffing J."/>
            <person name="Frey F.J."/>
            <person name="Frey B.M."/>
            <person name="Staub O."/>
        </authorList>
    </citation>
    <scope>VARIANTS LEU-355 AND ARG-497</scope>
</reference>
<reference evidence="52 53" key="56">
    <citation type="journal article" date="2009" name="Mol. Cell">
        <title>Insights into ubiquitin transfer cascades from a structure of a UbcH5B approximately ubiquitin-HECT(NEDD4L) complex.</title>
        <authorList>
            <person name="Kamadurai H.B."/>
            <person name="Kamadurai H.B."/>
            <person name="Souphron J."/>
            <person name="Scott D.C."/>
            <person name="Duda D.M."/>
            <person name="Miller D.J."/>
            <person name="Stringer D."/>
            <person name="Piper R.C."/>
            <person name="Schulman B.A."/>
        </authorList>
    </citation>
    <scope>X-RAY CRYSTALLOGRAPHY (3.10 ANGSTROMS) OF 596-975</scope>
    <scope>INTERACTION WITH UBE2D2</scope>
    <scope>FUNCTION</scope>
</reference>
<name>NED4L_HUMAN</name>
<gene>
    <name evidence="43" type="primary">NEDD4L</name>
    <name evidence="42" type="synonym">KIAA0439</name>
    <name type="synonym">NEDL3</name>
</gene>
<accession>Q96PU5</accession>
<accession>O43165</accession>
<accession>Q3LSM7</accession>
<accession>Q7Z5F1</accession>
<accession>Q7Z5F2</accession>
<accession>Q7Z5N3</accession>
<accession>Q8N5A7</accession>
<accession>Q8WUU9</accession>
<accession>Q9BW58</accession>
<accession>Q9H2W4</accession>
<accession>Q9NT88</accession>
<dbReference type="EC" id="2.3.2.26" evidence="40"/>
<dbReference type="EC" id="2.3.2.36" evidence="41"/>
<dbReference type="EMBL" id="AF210730">
    <property type="protein sequence ID" value="AAG43524.1"/>
    <property type="molecule type" value="mRNA"/>
</dbReference>
<dbReference type="EMBL" id="AF385931">
    <property type="protein sequence ID" value="AAM46208.1"/>
    <property type="molecule type" value="mRNA"/>
</dbReference>
<dbReference type="EMBL" id="AY312514">
    <property type="protein sequence ID" value="AAP75706.1"/>
    <property type="molecule type" value="mRNA"/>
</dbReference>
<dbReference type="EMBL" id="AY112983">
    <property type="protein sequence ID" value="AAM76728.1"/>
    <property type="molecule type" value="mRNA"/>
</dbReference>
<dbReference type="EMBL" id="AY112984">
    <property type="protein sequence ID" value="AAM76729.1"/>
    <property type="molecule type" value="mRNA"/>
</dbReference>
<dbReference type="EMBL" id="AY112985">
    <property type="protein sequence ID" value="AAM76730.1"/>
    <property type="molecule type" value="mRNA"/>
</dbReference>
<dbReference type="EMBL" id="AB071179">
    <property type="protein sequence ID" value="BAB69424.1"/>
    <property type="molecule type" value="mRNA"/>
</dbReference>
<dbReference type="EMBL" id="DQ181796">
    <property type="protein sequence ID" value="ABA10330.1"/>
    <property type="molecule type" value="mRNA"/>
</dbReference>
<dbReference type="EMBL" id="AC015988">
    <property type="status" value="NOT_ANNOTATED_CDS"/>
    <property type="molecule type" value="Genomic_DNA"/>
</dbReference>
<dbReference type="EMBL" id="AC090236">
    <property type="status" value="NOT_ANNOTATED_CDS"/>
    <property type="molecule type" value="Genomic_DNA"/>
</dbReference>
<dbReference type="EMBL" id="AC107896">
    <property type="status" value="NOT_ANNOTATED_CDS"/>
    <property type="molecule type" value="Genomic_DNA"/>
</dbReference>
<dbReference type="EMBL" id="CH471096">
    <property type="protein sequence ID" value="EAW63065.1"/>
    <property type="molecule type" value="Genomic_DNA"/>
</dbReference>
<dbReference type="EMBL" id="BC000621">
    <property type="protein sequence ID" value="AAH00621.2"/>
    <property type="molecule type" value="mRNA"/>
</dbReference>
<dbReference type="EMBL" id="BC019345">
    <property type="protein sequence ID" value="AAH19345.1"/>
    <property type="molecule type" value="mRNA"/>
</dbReference>
<dbReference type="EMBL" id="BC032597">
    <property type="protein sequence ID" value="AAH32597.1"/>
    <property type="molecule type" value="mRNA"/>
</dbReference>
<dbReference type="EMBL" id="AB007899">
    <property type="protein sequence ID" value="BAA23711.1"/>
    <property type="status" value="ALT_INIT"/>
    <property type="molecule type" value="mRNA"/>
</dbReference>
<dbReference type="EMBL" id="AL137469">
    <property type="protein sequence ID" value="CAB70754.1"/>
    <property type="molecule type" value="mRNA"/>
</dbReference>
<dbReference type="CCDS" id="CCDS45872.1">
    <molecule id="Q96PU5-1"/>
</dbReference>
<dbReference type="CCDS" id="CCDS45873.1">
    <molecule id="Q96PU5-5"/>
</dbReference>
<dbReference type="CCDS" id="CCDS45874.1">
    <molecule id="Q96PU5-7"/>
</dbReference>
<dbReference type="CCDS" id="CCDS45875.1">
    <molecule id="Q96PU5-4"/>
</dbReference>
<dbReference type="CCDS" id="CCDS45876.1">
    <molecule id="Q96PU5-9"/>
</dbReference>
<dbReference type="CCDS" id="CCDS58632.1">
    <molecule id="Q96PU5-2"/>
</dbReference>
<dbReference type="CCDS" id="CCDS59323.1">
    <molecule id="Q96PU5-6"/>
</dbReference>
<dbReference type="PIR" id="T46412">
    <property type="entry name" value="T46412"/>
</dbReference>
<dbReference type="RefSeq" id="NP_001138436.1">
    <molecule id="Q96PU5-4"/>
    <property type="nucleotide sequence ID" value="NM_001144964.1"/>
</dbReference>
<dbReference type="RefSeq" id="NP_001138437.1">
    <molecule id="Q96PU5-4"/>
    <property type="nucleotide sequence ID" value="NM_001144965.2"/>
</dbReference>
<dbReference type="RefSeq" id="NP_001138438.1">
    <molecule id="Q96PU5-4"/>
    <property type="nucleotide sequence ID" value="NM_001144966.3"/>
</dbReference>
<dbReference type="RefSeq" id="NP_001138439.1">
    <molecule id="Q96PU5-1"/>
    <property type="nucleotide sequence ID" value="NM_001144967.3"/>
</dbReference>
<dbReference type="RefSeq" id="NP_001138440.1">
    <molecule id="Q96PU5-7"/>
    <property type="nucleotide sequence ID" value="NM_001144968.2"/>
</dbReference>
<dbReference type="RefSeq" id="NP_001138441.1">
    <molecule id="Q96PU5-6"/>
    <property type="nucleotide sequence ID" value="NM_001144969.2"/>
</dbReference>
<dbReference type="RefSeq" id="NP_001138442.1">
    <molecule id="Q96PU5-9"/>
    <property type="nucleotide sequence ID" value="NM_001144970.3"/>
</dbReference>
<dbReference type="RefSeq" id="NP_001138443.1">
    <molecule id="Q96PU5-9"/>
    <property type="nucleotide sequence ID" value="NM_001144971.2"/>
</dbReference>
<dbReference type="RefSeq" id="NP_001230889.1">
    <molecule id="Q96PU5-2"/>
    <property type="nucleotide sequence ID" value="NM_001243960.2"/>
</dbReference>
<dbReference type="RefSeq" id="NP_056092.2">
    <molecule id="Q96PU5-5"/>
    <property type="nucleotide sequence ID" value="NM_015277.5"/>
</dbReference>
<dbReference type="RefSeq" id="XP_016881168.1">
    <molecule id="Q96PU5-4"/>
    <property type="nucleotide sequence ID" value="XM_017025679.3"/>
</dbReference>
<dbReference type="RefSeq" id="XP_024306897.1">
    <molecule id="Q96PU5-4"/>
    <property type="nucleotide sequence ID" value="XM_024451129.2"/>
</dbReference>
<dbReference type="RefSeq" id="XP_024306899.1">
    <molecule id="Q96PU5-9"/>
    <property type="nucleotide sequence ID" value="XM_024451131.2"/>
</dbReference>
<dbReference type="RefSeq" id="XP_024306903.1">
    <molecule id="Q96PU5-9"/>
    <property type="nucleotide sequence ID" value="XM_024451135.2"/>
</dbReference>
<dbReference type="RefSeq" id="XP_024306904.1">
    <molecule id="Q96PU5-9"/>
    <property type="nucleotide sequence ID" value="XM_024451136.2"/>
</dbReference>
<dbReference type="RefSeq" id="XP_047293358.1">
    <molecule id="Q96PU5-9"/>
    <property type="nucleotide sequence ID" value="XM_047437402.1"/>
</dbReference>
<dbReference type="RefSeq" id="XP_047293359.1">
    <molecule id="Q96PU5-4"/>
    <property type="nucleotide sequence ID" value="XM_047437403.1"/>
</dbReference>
<dbReference type="RefSeq" id="XP_047293360.1">
    <molecule id="Q96PU5-4"/>
    <property type="nucleotide sequence ID" value="XM_047437404.1"/>
</dbReference>
<dbReference type="RefSeq" id="XP_047293361.1">
    <molecule id="Q96PU5-9"/>
    <property type="nucleotide sequence ID" value="XM_047437405.1"/>
</dbReference>
<dbReference type="RefSeq" id="XP_047293373.1">
    <molecule id="Q96PU5-4"/>
    <property type="nucleotide sequence ID" value="XM_047437417.1"/>
</dbReference>
<dbReference type="RefSeq" id="XP_047293374.1">
    <molecule id="Q96PU5-4"/>
    <property type="nucleotide sequence ID" value="XM_047437418.1"/>
</dbReference>
<dbReference type="RefSeq" id="XP_047293375.1">
    <molecule id="Q96PU5-4"/>
    <property type="nucleotide sequence ID" value="XM_047437419.1"/>
</dbReference>
<dbReference type="RefSeq" id="XP_054174365.1">
    <molecule id="Q96PU5-4"/>
    <property type="nucleotide sequence ID" value="XM_054318390.1"/>
</dbReference>
<dbReference type="RefSeq" id="XP_054174366.1">
    <molecule id="Q96PU5-9"/>
    <property type="nucleotide sequence ID" value="XM_054318391.1"/>
</dbReference>
<dbReference type="RefSeq" id="XP_054174367.1">
    <molecule id="Q96PU5-4"/>
    <property type="nucleotide sequence ID" value="XM_054318392.1"/>
</dbReference>
<dbReference type="RefSeq" id="XP_054174368.1">
    <molecule id="Q96PU5-4"/>
    <property type="nucleotide sequence ID" value="XM_054318393.1"/>
</dbReference>
<dbReference type="RefSeq" id="XP_054174371.1">
    <molecule id="Q96PU5-9"/>
    <property type="nucleotide sequence ID" value="XM_054318396.1"/>
</dbReference>
<dbReference type="RefSeq" id="XP_054174372.1">
    <molecule id="Q96PU5-9"/>
    <property type="nucleotide sequence ID" value="XM_054318397.1"/>
</dbReference>
<dbReference type="RefSeq" id="XP_054174386.1">
    <molecule id="Q96PU5-4"/>
    <property type="nucleotide sequence ID" value="XM_054318411.1"/>
</dbReference>
<dbReference type="RefSeq" id="XP_054174387.1">
    <molecule id="Q96PU5-4"/>
    <property type="nucleotide sequence ID" value="XM_054318412.1"/>
</dbReference>
<dbReference type="RefSeq" id="XP_054174388.1">
    <molecule id="Q96PU5-4"/>
    <property type="nucleotide sequence ID" value="XM_054318413.1"/>
</dbReference>
<dbReference type="RefSeq" id="XP_054174389.1">
    <molecule id="Q96PU5-4"/>
    <property type="nucleotide sequence ID" value="XM_054318414.1"/>
</dbReference>
<dbReference type="RefSeq" id="XP_054174391.1">
    <molecule id="Q96PU5-9"/>
    <property type="nucleotide sequence ID" value="XM_054318416.1"/>
</dbReference>
<dbReference type="RefSeq" id="XP_054174392.1">
    <molecule id="Q96PU5-9"/>
    <property type="nucleotide sequence ID" value="XM_054318417.1"/>
</dbReference>
<dbReference type="PDB" id="2LAJ">
    <property type="method" value="NMR"/>
    <property type="chains" value="A=496-535"/>
</dbReference>
<dbReference type="PDB" id="2LB2">
    <property type="method" value="NMR"/>
    <property type="chains" value="A=386-420"/>
</dbReference>
<dbReference type="PDB" id="2LTY">
    <property type="method" value="NMR"/>
    <property type="chains" value="A=385-417"/>
</dbReference>
<dbReference type="PDB" id="2MPT">
    <property type="method" value="NMR"/>
    <property type="chains" value="A=496-539, B=945-957"/>
</dbReference>
<dbReference type="PDB" id="2NSQ">
    <property type="method" value="X-ray"/>
    <property type="resolution" value="1.85 A"/>
    <property type="chains" value="A=1-154"/>
</dbReference>
<dbReference type="PDB" id="2ONI">
    <property type="method" value="X-ray"/>
    <property type="resolution" value="2.20 A"/>
    <property type="chains" value="A=594-967"/>
</dbReference>
<dbReference type="PDB" id="3JVZ">
    <property type="method" value="X-ray"/>
    <property type="resolution" value="3.30 A"/>
    <property type="chains" value="C/D=596-975"/>
</dbReference>
<dbReference type="PDB" id="3JW0">
    <property type="method" value="X-ray"/>
    <property type="resolution" value="3.10 A"/>
    <property type="chains" value="C/D=596-975"/>
</dbReference>
<dbReference type="PDB" id="5HPK">
    <property type="method" value="X-ray"/>
    <property type="resolution" value="2.43 A"/>
    <property type="chains" value="A=594-975"/>
</dbReference>
<dbReference type="PDB" id="6ZBT">
    <property type="method" value="X-ray"/>
    <property type="resolution" value="1.80 A"/>
    <property type="chains" value="E/F/G/H=338-347"/>
</dbReference>
<dbReference type="PDB" id="6ZC9">
    <property type="method" value="X-ray"/>
    <property type="resolution" value="1.90 A"/>
    <property type="chains" value="E/F/G/H=444-453"/>
</dbReference>
<dbReference type="PDB" id="7LP1">
    <property type="method" value="X-ray"/>
    <property type="resolution" value="1.35 A"/>
    <property type="chains" value="A=494-532"/>
</dbReference>
<dbReference type="PDB" id="7LP2">
    <property type="method" value="X-ray"/>
    <property type="resolution" value="1.88 A"/>
    <property type="chains" value="A/C/E=385-418"/>
</dbReference>
<dbReference type="PDB" id="7LP3">
    <property type="method" value="X-ray"/>
    <property type="resolution" value="1.61 A"/>
    <property type="chains" value="A/C=193-226"/>
</dbReference>
<dbReference type="PDB" id="7LP4">
    <property type="method" value="NMR"/>
    <property type="chains" value="A=493-539"/>
</dbReference>
<dbReference type="PDB" id="7LP5">
    <property type="method" value="NMR"/>
    <property type="chains" value="A=493-539"/>
</dbReference>
<dbReference type="PDB" id="7NMZ">
    <property type="method" value="X-ray"/>
    <property type="resolution" value="2.30 A"/>
    <property type="chains" value="C=335-455"/>
</dbReference>
<dbReference type="PDBsum" id="2LAJ"/>
<dbReference type="PDBsum" id="2LB2"/>
<dbReference type="PDBsum" id="2LTY"/>
<dbReference type="PDBsum" id="2MPT"/>
<dbReference type="PDBsum" id="2NSQ"/>
<dbReference type="PDBsum" id="2ONI"/>
<dbReference type="PDBsum" id="3JVZ"/>
<dbReference type="PDBsum" id="3JW0"/>
<dbReference type="PDBsum" id="5HPK"/>
<dbReference type="PDBsum" id="6ZBT"/>
<dbReference type="PDBsum" id="6ZC9"/>
<dbReference type="PDBsum" id="7LP1"/>
<dbReference type="PDBsum" id="7LP2"/>
<dbReference type="PDBsum" id="7LP3"/>
<dbReference type="PDBsum" id="7LP4"/>
<dbReference type="PDBsum" id="7LP5"/>
<dbReference type="PDBsum" id="7NMZ"/>
<dbReference type="BMRB" id="Q96PU5"/>
<dbReference type="SMR" id="Q96PU5"/>
<dbReference type="BioGRID" id="116915">
    <property type="interactions" value="345"/>
</dbReference>
<dbReference type="CORUM" id="Q96PU5"/>
<dbReference type="DIP" id="DIP-41935N"/>
<dbReference type="FunCoup" id="Q96PU5">
    <property type="interactions" value="2685"/>
</dbReference>
<dbReference type="IntAct" id="Q96PU5">
    <property type="interactions" value="80"/>
</dbReference>
<dbReference type="MINT" id="Q96PU5"/>
<dbReference type="STRING" id="9606.ENSP00000383199"/>
<dbReference type="GlyCosmos" id="Q96PU5">
    <property type="glycosylation" value="2 sites, 2 glycans"/>
</dbReference>
<dbReference type="GlyGen" id="Q96PU5">
    <property type="glycosylation" value="3 sites, 2 O-linked glycans (2 sites)"/>
</dbReference>
<dbReference type="iPTMnet" id="Q96PU5"/>
<dbReference type="PhosphoSitePlus" id="Q96PU5"/>
<dbReference type="SwissPalm" id="Q96PU5"/>
<dbReference type="BioMuta" id="NEDD4L"/>
<dbReference type="DMDM" id="73921204"/>
<dbReference type="jPOST" id="Q96PU5"/>
<dbReference type="MassIVE" id="Q96PU5"/>
<dbReference type="PaxDb" id="9606-ENSP00000383199"/>
<dbReference type="PeptideAtlas" id="Q96PU5"/>
<dbReference type="ProteomicsDB" id="77752">
    <molecule id="Q96PU5-1"/>
</dbReference>
<dbReference type="ProteomicsDB" id="77753">
    <molecule id="Q96PU5-2"/>
</dbReference>
<dbReference type="ProteomicsDB" id="77754">
    <molecule id="Q96PU5-3"/>
</dbReference>
<dbReference type="ProteomicsDB" id="77755">
    <molecule id="Q96PU5-4"/>
</dbReference>
<dbReference type="ProteomicsDB" id="77756">
    <molecule id="Q96PU5-5"/>
</dbReference>
<dbReference type="ProteomicsDB" id="77757">
    <molecule id="Q96PU5-6"/>
</dbReference>
<dbReference type="ProteomicsDB" id="77758">
    <molecule id="Q96PU5-7"/>
</dbReference>
<dbReference type="ProteomicsDB" id="77760">
    <molecule id="Q96PU5-9"/>
</dbReference>
<dbReference type="Pumba" id="Q96PU5"/>
<dbReference type="Antibodypedia" id="5421">
    <property type="antibodies" value="263 antibodies from 33 providers"/>
</dbReference>
<dbReference type="DNASU" id="23327"/>
<dbReference type="Ensembl" id="ENST00000256830.13">
    <molecule id="Q96PU5-3"/>
    <property type="protein sequence ID" value="ENSP00000256830.8"/>
    <property type="gene ID" value="ENSG00000049759.20"/>
</dbReference>
<dbReference type="Ensembl" id="ENST00000356462.10">
    <molecule id="Q96PU5-2"/>
    <property type="protein sequence ID" value="ENSP00000348847.5"/>
    <property type="gene ID" value="ENSG00000049759.20"/>
</dbReference>
<dbReference type="Ensembl" id="ENST00000357895.9">
    <molecule id="Q96PU5-7"/>
    <property type="protein sequence ID" value="ENSP00000350569.4"/>
    <property type="gene ID" value="ENSG00000049759.20"/>
</dbReference>
<dbReference type="Ensembl" id="ENST00000382850.8">
    <molecule id="Q96PU5-5"/>
    <property type="protein sequence ID" value="ENSP00000372301.3"/>
    <property type="gene ID" value="ENSG00000049759.20"/>
</dbReference>
<dbReference type="Ensembl" id="ENST00000400345.8">
    <molecule id="Q96PU5-1"/>
    <property type="protein sequence ID" value="ENSP00000383199.2"/>
    <property type="gene ID" value="ENSG00000049759.20"/>
</dbReference>
<dbReference type="Ensembl" id="ENST00000431212.6">
    <molecule id="Q96PU5-4"/>
    <property type="protein sequence ID" value="ENSP00000389406.1"/>
    <property type="gene ID" value="ENSG00000049759.20"/>
</dbReference>
<dbReference type="Ensembl" id="ENST00000435432.6">
    <molecule id="Q96PU5-9"/>
    <property type="protein sequence ID" value="ENSP00000393395.1"/>
    <property type="gene ID" value="ENSG00000049759.20"/>
</dbReference>
<dbReference type="Ensembl" id="ENST00000456173.6">
    <molecule id="Q96PU5-9"/>
    <property type="protein sequence ID" value="ENSP00000405440.1"/>
    <property type="gene ID" value="ENSG00000049759.20"/>
</dbReference>
<dbReference type="Ensembl" id="ENST00000456986.5">
    <molecule id="Q96PU5-4"/>
    <property type="protein sequence ID" value="ENSP00000411947.1"/>
    <property type="gene ID" value="ENSG00000049759.20"/>
</dbReference>
<dbReference type="Ensembl" id="ENST00000586263.5">
    <molecule id="Q96PU5-6"/>
    <property type="protein sequence ID" value="ENSP00000468546.1"/>
    <property type="gene ID" value="ENSG00000049759.20"/>
</dbReference>
<dbReference type="Ensembl" id="ENST00000674517.1">
    <molecule id="Q96PU5-9"/>
    <property type="protein sequence ID" value="ENSP00000501665.1"/>
    <property type="gene ID" value="ENSG00000049759.20"/>
</dbReference>
<dbReference type="Ensembl" id="ENST00000675502.1">
    <molecule id="Q96PU5-9"/>
    <property type="protein sequence ID" value="ENSP00000502428.1"/>
    <property type="gene ID" value="ENSG00000049759.20"/>
</dbReference>
<dbReference type="Ensembl" id="ENST00000675801.1">
    <molecule id="Q96PU5-9"/>
    <property type="protein sequence ID" value="ENSP00000502688.1"/>
    <property type="gene ID" value="ENSG00000049759.20"/>
</dbReference>
<dbReference type="Ensembl" id="ENST00000675865.1">
    <molecule id="Q96PU5-9"/>
    <property type="protein sequence ID" value="ENSP00000502003.1"/>
    <property type="gene ID" value="ENSG00000049759.20"/>
</dbReference>
<dbReference type="Ensembl" id="ENST00000676226.1">
    <molecule id="Q96PU5-9"/>
    <property type="protein sequence ID" value="ENSP00000502325.1"/>
    <property type="gene ID" value="ENSG00000049759.20"/>
</dbReference>
<dbReference type="GeneID" id="23327"/>
<dbReference type="KEGG" id="hsa:23327"/>
<dbReference type="MANE-Select" id="ENST00000400345.8">
    <property type="protein sequence ID" value="ENSP00000383199.2"/>
    <property type="RefSeq nucleotide sequence ID" value="NM_001144967.3"/>
    <property type="RefSeq protein sequence ID" value="NP_001138439.1"/>
</dbReference>
<dbReference type="UCSC" id="uc002lgx.4">
    <molecule id="Q96PU5-1"/>
    <property type="organism name" value="human"/>
</dbReference>
<dbReference type="AGR" id="HGNC:7728"/>
<dbReference type="CTD" id="23327"/>
<dbReference type="DisGeNET" id="23327"/>
<dbReference type="GeneCards" id="NEDD4L"/>
<dbReference type="HGNC" id="HGNC:7728">
    <property type="gene designation" value="NEDD4L"/>
</dbReference>
<dbReference type="HPA" id="ENSG00000049759">
    <property type="expression patterns" value="Low tissue specificity"/>
</dbReference>
<dbReference type="MalaCards" id="NEDD4L"/>
<dbReference type="MIM" id="606384">
    <property type="type" value="gene"/>
</dbReference>
<dbReference type="MIM" id="617201">
    <property type="type" value="phenotype"/>
</dbReference>
<dbReference type="neXtProt" id="NX_Q96PU5"/>
<dbReference type="OpenTargets" id="ENSG00000049759"/>
<dbReference type="Orphanet" id="98892">
    <property type="disease" value="Periventricular nodular heterotopia"/>
</dbReference>
<dbReference type="PharmGKB" id="PA31534"/>
<dbReference type="VEuPathDB" id="HostDB:ENSG00000049759"/>
<dbReference type="eggNOG" id="KOG0940">
    <property type="taxonomic scope" value="Eukaryota"/>
</dbReference>
<dbReference type="GeneTree" id="ENSGT00940000156873"/>
<dbReference type="InParanoid" id="Q96PU5"/>
<dbReference type="OMA" id="YSELCNE"/>
<dbReference type="OrthoDB" id="423283at2759"/>
<dbReference type="PAN-GO" id="Q96PU5">
    <property type="GO annotations" value="8 GO annotations based on evolutionary models"/>
</dbReference>
<dbReference type="PhylomeDB" id="Q96PU5"/>
<dbReference type="TreeFam" id="TF323658"/>
<dbReference type="BioCyc" id="MetaCyc:ENSG00000049759-MONOMER"/>
<dbReference type="BRENDA" id="2.3.2.26">
    <property type="organism ID" value="2681"/>
</dbReference>
<dbReference type="BRENDA" id="2.3.2.B8">
    <property type="organism ID" value="2681"/>
</dbReference>
<dbReference type="PathwayCommons" id="Q96PU5"/>
<dbReference type="Reactome" id="R-HSA-162588">
    <property type="pathway name" value="Budding and maturation of HIV virion"/>
</dbReference>
<dbReference type="Reactome" id="R-HSA-2173788">
    <property type="pathway name" value="Downregulation of TGF-beta receptor signaling"/>
</dbReference>
<dbReference type="Reactome" id="R-HSA-2173795">
    <property type="pathway name" value="Downregulation of SMAD2/3:SMAD4 transcriptional activity"/>
</dbReference>
<dbReference type="Reactome" id="R-HSA-2672351">
    <property type="pathway name" value="Stimuli-sensing channels"/>
</dbReference>
<dbReference type="Reactome" id="R-HSA-983168">
    <property type="pathway name" value="Antigen processing: Ubiquitination &amp; Proteasome degradation"/>
</dbReference>
<dbReference type="SignaLink" id="Q96PU5"/>
<dbReference type="SIGNOR" id="Q96PU5"/>
<dbReference type="UniPathway" id="UPA00143"/>
<dbReference type="BioGRID-ORCS" id="23327">
    <property type="hits" value="15 hits in 1196 CRISPR screens"/>
</dbReference>
<dbReference type="ChiTaRS" id="NEDD4L">
    <property type="organism name" value="human"/>
</dbReference>
<dbReference type="EvolutionaryTrace" id="Q96PU5"/>
<dbReference type="GeneWiki" id="NEDD4L"/>
<dbReference type="GenomeRNAi" id="23327"/>
<dbReference type="Pharos" id="Q96PU5">
    <property type="development level" value="Tbio"/>
</dbReference>
<dbReference type="PRO" id="PR:Q96PU5"/>
<dbReference type="Proteomes" id="UP000005640">
    <property type="component" value="Chromosome 18"/>
</dbReference>
<dbReference type="RNAct" id="Q96PU5">
    <property type="molecule type" value="protein"/>
</dbReference>
<dbReference type="Bgee" id="ENSG00000049759">
    <property type="expression patterns" value="Expressed in ventricular zone and 193 other cell types or tissues"/>
</dbReference>
<dbReference type="ExpressionAtlas" id="Q96PU5">
    <property type="expression patterns" value="baseline and differential"/>
</dbReference>
<dbReference type="GO" id="GO:0016324">
    <property type="term" value="C:apical plasma membrane"/>
    <property type="evidence" value="ECO:0000314"/>
    <property type="project" value="UniProt"/>
</dbReference>
<dbReference type="GO" id="GO:0005737">
    <property type="term" value="C:cytoplasm"/>
    <property type="evidence" value="ECO:0000318"/>
    <property type="project" value="GO_Central"/>
</dbReference>
<dbReference type="GO" id="GO:0005829">
    <property type="term" value="C:cytosol"/>
    <property type="evidence" value="ECO:0000304"/>
    <property type="project" value="Reactome"/>
</dbReference>
<dbReference type="GO" id="GO:0070062">
    <property type="term" value="C:extracellular exosome"/>
    <property type="evidence" value="ECO:0007005"/>
    <property type="project" value="UniProtKB"/>
</dbReference>
<dbReference type="GO" id="GO:0005794">
    <property type="term" value="C:Golgi apparatus"/>
    <property type="evidence" value="ECO:0007669"/>
    <property type="project" value="UniProtKB-SubCell"/>
</dbReference>
<dbReference type="GO" id="GO:0005771">
    <property type="term" value="C:multivesicular body"/>
    <property type="evidence" value="ECO:0007669"/>
    <property type="project" value="UniProtKB-SubCell"/>
</dbReference>
<dbReference type="GO" id="GO:0005654">
    <property type="term" value="C:nucleoplasm"/>
    <property type="evidence" value="ECO:0000304"/>
    <property type="project" value="Reactome"/>
</dbReference>
<dbReference type="GO" id="GO:0019870">
    <property type="term" value="F:potassium channel inhibitor activity"/>
    <property type="evidence" value="ECO:0000314"/>
    <property type="project" value="BHF-UCL"/>
</dbReference>
<dbReference type="GO" id="GO:0019871">
    <property type="term" value="F:sodium channel inhibitor activity"/>
    <property type="evidence" value="ECO:0000314"/>
    <property type="project" value="BHF-UCL"/>
</dbReference>
<dbReference type="GO" id="GO:0017080">
    <property type="term" value="F:sodium channel regulator activity"/>
    <property type="evidence" value="ECO:0000314"/>
    <property type="project" value="UniProtKB"/>
</dbReference>
<dbReference type="GO" id="GO:0044325">
    <property type="term" value="F:transmembrane transporter binding"/>
    <property type="evidence" value="ECO:0000353"/>
    <property type="project" value="BHF-UCL"/>
</dbReference>
<dbReference type="GO" id="GO:0061630">
    <property type="term" value="F:ubiquitin protein ligase activity"/>
    <property type="evidence" value="ECO:0000314"/>
    <property type="project" value="UniProt"/>
</dbReference>
<dbReference type="GO" id="GO:0004842">
    <property type="term" value="F:ubiquitin-protein transferase activity"/>
    <property type="evidence" value="ECO:0000304"/>
    <property type="project" value="Reactome"/>
</dbReference>
<dbReference type="GO" id="GO:0034220">
    <property type="term" value="P:monoatomic ion transmembrane transport"/>
    <property type="evidence" value="ECO:0000304"/>
    <property type="project" value="Reactome"/>
</dbReference>
<dbReference type="GO" id="GO:1903765">
    <property type="term" value="P:negative regulation of potassium ion export across plasma membrane"/>
    <property type="evidence" value="ECO:0000314"/>
    <property type="project" value="BHF-UCL"/>
</dbReference>
<dbReference type="GO" id="GO:1901380">
    <property type="term" value="P:negative regulation of potassium ion transmembrane transport"/>
    <property type="evidence" value="ECO:0000314"/>
    <property type="project" value="BHF-UCL"/>
</dbReference>
<dbReference type="GO" id="GO:2000009">
    <property type="term" value="P:negative regulation of protein localization to cell surface"/>
    <property type="evidence" value="ECO:0000314"/>
    <property type="project" value="BHF-UCL"/>
</dbReference>
<dbReference type="GO" id="GO:1903783">
    <property type="term" value="P:negative regulation of sodium ion import across plasma membrane"/>
    <property type="evidence" value="ECO:0000314"/>
    <property type="project" value="UniProt"/>
</dbReference>
<dbReference type="GO" id="GO:1902306">
    <property type="term" value="P:negative regulation of sodium ion transmembrane transport"/>
    <property type="evidence" value="ECO:0000314"/>
    <property type="project" value="BHF-UCL"/>
</dbReference>
<dbReference type="GO" id="GO:0007528">
    <property type="term" value="P:neuromuscular junction development"/>
    <property type="evidence" value="ECO:0000318"/>
    <property type="project" value="GO_Central"/>
</dbReference>
<dbReference type="GO" id="GO:0031175">
    <property type="term" value="P:neuron projection development"/>
    <property type="evidence" value="ECO:0000318"/>
    <property type="project" value="GO_Central"/>
</dbReference>
<dbReference type="GO" id="GO:2001288">
    <property type="term" value="P:positive regulation of caveolin-mediated endocytosis"/>
    <property type="evidence" value="ECO:0000250"/>
    <property type="project" value="BHF-UCL"/>
</dbReference>
<dbReference type="GO" id="GO:1903861">
    <property type="term" value="P:positive regulation of dendrite extension"/>
    <property type="evidence" value="ECO:0000314"/>
    <property type="project" value="UniProtKB"/>
</dbReference>
<dbReference type="GO" id="GO:0045732">
    <property type="term" value="P:positive regulation of protein catabolic process"/>
    <property type="evidence" value="ECO:0007669"/>
    <property type="project" value="Ensembl"/>
</dbReference>
<dbReference type="GO" id="GO:0043161">
    <property type="term" value="P:proteasome-mediated ubiquitin-dependent protein catabolic process"/>
    <property type="evidence" value="ECO:0000314"/>
    <property type="project" value="BHF-UCL"/>
</dbReference>
<dbReference type="GO" id="GO:0070936">
    <property type="term" value="P:protein K48-linked ubiquitination"/>
    <property type="evidence" value="ECO:0000314"/>
    <property type="project" value="BHF-UCL"/>
</dbReference>
<dbReference type="GO" id="GO:0006513">
    <property type="term" value="P:protein monoubiquitination"/>
    <property type="evidence" value="ECO:0007669"/>
    <property type="project" value="Ensembl"/>
</dbReference>
<dbReference type="GO" id="GO:0016567">
    <property type="term" value="P:protein ubiquitination"/>
    <property type="evidence" value="ECO:0000314"/>
    <property type="project" value="UniProtKB"/>
</dbReference>
<dbReference type="GO" id="GO:0032801">
    <property type="term" value="P:receptor catabolic process"/>
    <property type="evidence" value="ECO:0000318"/>
    <property type="project" value="GO_Central"/>
</dbReference>
<dbReference type="GO" id="GO:0031623">
    <property type="term" value="P:receptor internalization"/>
    <property type="evidence" value="ECO:0000318"/>
    <property type="project" value="GO_Central"/>
</dbReference>
<dbReference type="GO" id="GO:0048814">
    <property type="term" value="P:regulation of dendrite morphogenesis"/>
    <property type="evidence" value="ECO:0000318"/>
    <property type="project" value="GO_Central"/>
</dbReference>
<dbReference type="GO" id="GO:0003254">
    <property type="term" value="P:regulation of membrane depolarization"/>
    <property type="evidence" value="ECO:0000314"/>
    <property type="project" value="BHF-UCL"/>
</dbReference>
<dbReference type="GO" id="GO:0042391">
    <property type="term" value="P:regulation of membrane potential"/>
    <property type="evidence" value="ECO:0000314"/>
    <property type="project" value="BHF-UCL"/>
</dbReference>
<dbReference type="GO" id="GO:0060306">
    <property type="term" value="P:regulation of membrane repolarization"/>
    <property type="evidence" value="ECO:0000314"/>
    <property type="project" value="BHF-UCL"/>
</dbReference>
<dbReference type="GO" id="GO:0031647">
    <property type="term" value="P:regulation of protein stability"/>
    <property type="evidence" value="ECO:0000315"/>
    <property type="project" value="UniProtKB"/>
</dbReference>
<dbReference type="GO" id="GO:1902305">
    <property type="term" value="P:regulation of sodium ion transmembrane transport"/>
    <property type="evidence" value="ECO:0000314"/>
    <property type="project" value="UniProtKB"/>
</dbReference>
<dbReference type="GO" id="GO:0050807">
    <property type="term" value="P:regulation of synapse organization"/>
    <property type="evidence" value="ECO:0000318"/>
    <property type="project" value="GO_Central"/>
</dbReference>
<dbReference type="GO" id="GO:0006511">
    <property type="term" value="P:ubiquitin-dependent protein catabolic process"/>
    <property type="evidence" value="ECO:0000314"/>
    <property type="project" value="BHF-UCL"/>
</dbReference>
<dbReference type="GO" id="GO:0086005">
    <property type="term" value="P:ventricular cardiac muscle cell action potential"/>
    <property type="evidence" value="ECO:0000250"/>
    <property type="project" value="BHF-UCL"/>
</dbReference>
<dbReference type="CDD" id="cd04033">
    <property type="entry name" value="C2_NEDD4_NEDD4L"/>
    <property type="match status" value="1"/>
</dbReference>
<dbReference type="CDD" id="cd00078">
    <property type="entry name" value="HECTc"/>
    <property type="match status" value="1"/>
</dbReference>
<dbReference type="CDD" id="cd00201">
    <property type="entry name" value="WW"/>
    <property type="match status" value="4"/>
</dbReference>
<dbReference type="DisProt" id="DP02292"/>
<dbReference type="FunFam" id="2.20.70.10:FF:000017">
    <property type="entry name" value="E3 ubiquitin-protein ligase"/>
    <property type="match status" value="1"/>
</dbReference>
<dbReference type="FunFam" id="3.90.1750.10:FF:000026">
    <property type="entry name" value="E3 ubiquitin-protein ligase HACE1"/>
    <property type="match status" value="1"/>
</dbReference>
<dbReference type="FunFam" id="3.30.2160.10:FF:000001">
    <property type="entry name" value="E3 ubiquitin-protein ligase NEDD4-like"/>
    <property type="match status" value="1"/>
</dbReference>
<dbReference type="FunFam" id="3.30.2410.10:FF:000001">
    <property type="entry name" value="E3 ubiquitin-protein ligase NEDD4-like"/>
    <property type="match status" value="1"/>
</dbReference>
<dbReference type="FunFam" id="3.90.1750.10:FF:000001">
    <property type="entry name" value="E3 ubiquitin-protein ligase NEDD4-like"/>
    <property type="match status" value="1"/>
</dbReference>
<dbReference type="FunFam" id="2.20.70.10:FF:000006">
    <property type="entry name" value="E3 ubiquitin-protein ligase NEDD4-like protein"/>
    <property type="match status" value="1"/>
</dbReference>
<dbReference type="FunFam" id="2.20.70.10:FF:000008">
    <property type="entry name" value="E3 ubiquitin-protein ligase NEDD4-like protein"/>
    <property type="match status" value="1"/>
</dbReference>
<dbReference type="FunFam" id="2.20.70.10:FF:000025">
    <property type="entry name" value="E3 ubiquitin-protein ligase NEDD4-like protein"/>
    <property type="match status" value="1"/>
</dbReference>
<dbReference type="FunFam" id="2.60.40.150:FF:000047">
    <property type="entry name" value="Putative E3 ubiquitin-protein ligase NEDD4-like"/>
    <property type="match status" value="1"/>
</dbReference>
<dbReference type="Gene3D" id="2.20.70.10">
    <property type="match status" value="3"/>
</dbReference>
<dbReference type="Gene3D" id="2.60.40.150">
    <property type="entry name" value="C2 domain"/>
    <property type="match status" value="1"/>
</dbReference>
<dbReference type="Gene3D" id="3.30.2160.10">
    <property type="entry name" value="Hect, E3 ligase catalytic domain"/>
    <property type="match status" value="1"/>
</dbReference>
<dbReference type="Gene3D" id="3.30.2410.10">
    <property type="entry name" value="Hect, E3 ligase catalytic domain"/>
    <property type="match status" value="1"/>
</dbReference>
<dbReference type="Gene3D" id="3.90.1750.10">
    <property type="entry name" value="Hect, E3 ligase catalytic domains"/>
    <property type="match status" value="1"/>
</dbReference>
<dbReference type="IDEAL" id="IID00114"/>
<dbReference type="InterPro" id="IPR000008">
    <property type="entry name" value="C2_dom"/>
</dbReference>
<dbReference type="InterPro" id="IPR035892">
    <property type="entry name" value="C2_domain_sf"/>
</dbReference>
<dbReference type="InterPro" id="IPR024928">
    <property type="entry name" value="E3_ub_ligase_SMURF1"/>
</dbReference>
<dbReference type="InterPro" id="IPR050409">
    <property type="entry name" value="E3_ubiq-protein_ligase"/>
</dbReference>
<dbReference type="InterPro" id="IPR000569">
    <property type="entry name" value="HECT_dom"/>
</dbReference>
<dbReference type="InterPro" id="IPR035983">
    <property type="entry name" value="Hect_E3_ubiquitin_ligase"/>
</dbReference>
<dbReference type="InterPro" id="IPR001202">
    <property type="entry name" value="WW_dom"/>
</dbReference>
<dbReference type="InterPro" id="IPR036020">
    <property type="entry name" value="WW_dom_sf"/>
</dbReference>
<dbReference type="PANTHER" id="PTHR11254:SF443">
    <property type="entry name" value="E3 UBIQUITIN-PROTEIN LIGASE NEDD4-LIKE"/>
    <property type="match status" value="1"/>
</dbReference>
<dbReference type="PANTHER" id="PTHR11254">
    <property type="entry name" value="HECT DOMAIN UBIQUITIN-PROTEIN LIGASE"/>
    <property type="match status" value="1"/>
</dbReference>
<dbReference type="Pfam" id="PF00168">
    <property type="entry name" value="C2"/>
    <property type="match status" value="1"/>
</dbReference>
<dbReference type="Pfam" id="PF00632">
    <property type="entry name" value="HECT"/>
    <property type="match status" value="1"/>
</dbReference>
<dbReference type="Pfam" id="PF00397">
    <property type="entry name" value="WW"/>
    <property type="match status" value="4"/>
</dbReference>
<dbReference type="PIRSF" id="PIRSF001569">
    <property type="entry name" value="E3_ub_ligase_SMURF1"/>
    <property type="match status" value="1"/>
</dbReference>
<dbReference type="PRINTS" id="PR00360">
    <property type="entry name" value="C2DOMAIN"/>
</dbReference>
<dbReference type="SMART" id="SM00239">
    <property type="entry name" value="C2"/>
    <property type="match status" value="1"/>
</dbReference>
<dbReference type="SMART" id="SM00119">
    <property type="entry name" value="HECTc"/>
    <property type="match status" value="1"/>
</dbReference>
<dbReference type="SMART" id="SM00456">
    <property type="entry name" value="WW"/>
    <property type="match status" value="4"/>
</dbReference>
<dbReference type="SUPFAM" id="SSF49562">
    <property type="entry name" value="C2 domain (Calcium/lipid-binding domain, CaLB)"/>
    <property type="match status" value="1"/>
</dbReference>
<dbReference type="SUPFAM" id="SSF56204">
    <property type="entry name" value="Hect, E3 ligase catalytic domain"/>
    <property type="match status" value="1"/>
</dbReference>
<dbReference type="SUPFAM" id="SSF51045">
    <property type="entry name" value="WW domain"/>
    <property type="match status" value="4"/>
</dbReference>
<dbReference type="PROSITE" id="PS50004">
    <property type="entry name" value="C2"/>
    <property type="match status" value="1"/>
</dbReference>
<dbReference type="PROSITE" id="PS50237">
    <property type="entry name" value="HECT"/>
    <property type="match status" value="1"/>
</dbReference>
<dbReference type="PROSITE" id="PS01159">
    <property type="entry name" value="WW_DOMAIN_1"/>
    <property type="match status" value="4"/>
</dbReference>
<dbReference type="PROSITE" id="PS50020">
    <property type="entry name" value="WW_DOMAIN_2"/>
    <property type="match status" value="4"/>
</dbReference>
<comment type="function">
    <text evidence="1 10 13 15 17 18 20 22 24 34 35 36 38 39 41">E3 ubiquitin-protein ligase that mediates the polyubiquitination of lysine and cysteine residues on target proteins and is thereby implicated in the regulation of various signaling pathways including autophagy, innate immunity or DNA repair (PubMed:20064473, PubMed:31959741, PubMed:33608556). Inhibits TGF-beta signaling by triggering SMAD2 and TGFBR1 ubiquitination and proteasome-dependent degradation (PubMed:15496141). Downregulates autophagy and cell growth by ubiquitinating and reducing cellular ULK1 or ASCT2 levels (PubMed:28820317, PubMed:31959741). Promotes ubiquitination and internalization of various plasma membrane channels such as ENaC, SCN2A/Nav1.2, SCN3A/Nav1.3, SCN5A/Nav1.5, SCN9A/Nav1.7, SCN10A/Nav1.8, KCNA3/Kv1.3, KCNH2, EAAT1, KCNQ2/Kv7.2, KCNQ3/Kv7.3 or CLC5 (PubMed:26363003, PubMed:27445338). Promotes ubiquitination and degradation of SGK1 and TNK2. Ubiquitinates BRAT1 and this ubiquitination is enhanced in the presence of NDFIP1 (PubMed:25631046). Plays a role in dendrite formation by melanocytes (PubMed:23999003). Involved in the regulation of TOR signaling (PubMed:27694961). Ubiquitinates and regulates protein levels of NTRK1 once this one is activated by NGF (PubMed:27445338). Plays a role in antiviral innate immunity by catalyzing 'Lys-29'-linked cysteine ubiquitination of TRAF3, resulting in enhanced 'Lys-48' and 'Lys-63'-linked ubiquitination of TRAF3 (PubMed:33608556). Ubiquitinates TTYH2 and TTYH3 and regulates protein levels of TTYH2 (PubMed:18577513).</text>
</comment>
<comment type="catalytic activity">
    <reaction evidence="40">
        <text>S-ubiquitinyl-[E2 ubiquitin-conjugating enzyme]-L-cysteine + [acceptor protein]-L-lysine = [E2 ubiquitin-conjugating enzyme]-L-cysteine + N(6)-ubiquitinyl-[acceptor protein]-L-lysine.</text>
        <dbReference type="EC" id="2.3.2.26"/>
    </reaction>
</comment>
<comment type="catalytic activity">
    <reaction evidence="41">
        <text>[E2 ubiquitin-conjugating enzyme]-S-ubiquitinyl-L-cysteine + [acceptor protein]-L-cysteine = [E2 ubiquitin-conjugating enzyme]-L-cysteine + [acceptor protein]-S-ubiquitinyl-L-cysteine.</text>
        <dbReference type="EC" id="2.3.2.36"/>
    </reaction>
</comment>
<comment type="activity regulation">
    <text evidence="9 36">Activated by NDFIP1- and NDFIP2-binding.</text>
</comment>
<comment type="pathway">
    <text>Protein modification; protein ubiquitination.</text>
</comment>
<comment type="subunit">
    <text evidence="1 7 8 9 11 15 17 18 19 21 22 24 26 27 28 29 30 31 32 33 36 37 38">Interacts with UBE2E3 (By similarity). Interacts with NDFIP1; this interaction activates the E3 ubiquitin-protein ligase (PubMed:11748237, PubMed:26363003). Interacts with NDFIP2; this interaction activates the E3 ubiquitin-protein ligase (PubMed:26363003). Interacts (via WW domains) with SCN1A (By similarity). Interacts (via WW domains) with SCN2A (PubMed:15548568). Interacts (via WW domains) with SCN3A (PubMed:15548568). Interacts (via WW domains) with SCN5A (PubMed:15217910, PubMed:15548568). Interacts (via WW domains) with SCN8A (By similarity). Interacts (via WW domains) with SCN9A (By similarity). Interacts (via WW domains) with SCN10A (By similarity). Interacts (via WW domains) with CLCN5 (PubMed:15489223). Interacts with SMAD2 (PubMed:15496141). Interacts with SMAD3 (PubMed:15496141). Interacts with SMAD6 (PubMed:15496141). Interacts with SMAD7 (PubMed:15496141). The phosphorylated form interacts with 14-3-3 proteins (PubMed:15677482). Interacts with TNK2 (PubMed:19144635, PubMed:20086093). Interacts with WNK1 (PubMed:20525693). Interacts with SGK1 (PubMed:11696533, PubMed:20730100). Interacts (via C2 domain) with NPC2 (PubMed:19664597). Interacts with ARRDC4 (PubMed:23236378). Interacts with KCNQ1; promotes internalization of KCNQ1 (PubMed:22024150). Interacts (via domains WW1, 3 and 4) with USP36; the interaction inhibits ubiquitination of, at least, NTRK1, KCNQ2 and KCNQ3 by NEDD4L (PubMed:27445338). Interacts with PRRG4 (via cytoplasmic domain) (PubMed:23873930). Interacts with LDLRAD3; the interaction is direct (PubMed:26854353). Interacts with UBE2D2 (PubMed:20064473). Interacts with TTYH2 and TTYH3 (PubMed:18577513).</text>
</comment>
<comment type="subunit">
    <text evidence="6">(Microbial infection) Interacts with Epstein-Barr virus LMP2A.</text>
</comment>
<comment type="interaction">
    <interactant intactId="EBI-717962">
        <id>Q96PU5</id>
    </interactant>
    <interactant intactId="EBI-2875665">
        <id>Q96B67</id>
        <label>ARRDC3</label>
    </interactant>
    <organismsDiffer>false</organismsDiffer>
    <experiments>4</experiments>
</comment>
<comment type="interaction">
    <interactant intactId="EBI-717962">
        <id>Q96PU5</id>
    </interactant>
    <interactant intactId="EBI-724310">
        <id>Q15038</id>
        <label>DAZAP2</label>
    </interactant>
    <organismsDiffer>false</organismsDiffer>
    <experiments>3</experiments>
</comment>
<comment type="interaction">
    <interactant intactId="EBI-717962">
        <id>Q96PU5</id>
    </interactant>
    <interactant intactId="EBI-8636612">
        <id>Q15884</id>
        <label>ENTREP1</label>
    </interactant>
    <organismsDiffer>false</organismsDiffer>
    <experiments>4</experiments>
</comment>
<comment type="interaction">
    <interactant intactId="EBI-717962">
        <id>Q96PU5</id>
    </interactant>
    <interactant intactId="EBI-9824765">
        <id>O14669</id>
        <label>PRRG2</label>
    </interactant>
    <organismsDiffer>false</organismsDiffer>
    <experiments>2</experiments>
</comment>
<comment type="interaction">
    <interactant intactId="EBI-717962">
        <id>Q96PU5</id>
    </interactant>
    <interactant intactId="EBI-3918643">
        <id>Q9BZD6</id>
        <label>PRRG4</label>
    </interactant>
    <organismsDiffer>false</organismsDiffer>
    <experiments>3</experiments>
</comment>
<comment type="interaction">
    <interactant intactId="EBI-717962">
        <id>Q96PU5</id>
    </interactant>
    <interactant intactId="EBI-4319335">
        <id>P49281</id>
        <label>SLC11A2</label>
    </interactant>
    <organismsDiffer>false</organismsDiffer>
    <experiments>2</experiments>
</comment>
<comment type="interaction">
    <interactant intactId="EBI-717962">
        <id>Q96PU5</id>
    </interactant>
    <interactant intactId="EBI-356498">
        <id>P62258</id>
        <label>YWHAE</label>
    </interactant>
    <organismsDiffer>false</organismsDiffer>
    <experiments>6</experiments>
</comment>
<comment type="interaction">
    <interactant intactId="EBI-717962">
        <id>Q96PU5</id>
    </interactant>
    <interactant intactId="EBI-359832">
        <id>P61981</id>
        <label>YWHAG</label>
    </interactant>
    <organismsDiffer>false</organismsDiffer>
    <experiments>5</experiments>
</comment>
<comment type="interaction">
    <interactant intactId="EBI-717962">
        <id>Q96PU5</id>
    </interactant>
    <interactant intactId="EBI-306940">
        <id>Q04917</id>
        <label>YWHAH</label>
    </interactant>
    <organismsDiffer>false</organismsDiffer>
    <experiments>5</experiments>
</comment>
<comment type="interaction">
    <interactant intactId="EBI-6955201">
        <id>Q96PU5-2</id>
    </interactant>
    <interactant intactId="EBI-2875665">
        <id>Q96B67</id>
        <label>ARRDC3</label>
    </interactant>
    <organismsDiffer>false</organismsDiffer>
    <experiments>5</experiments>
</comment>
<comment type="interaction">
    <interactant intactId="EBI-6955201">
        <id>Q96PU5-2</id>
    </interactant>
    <interactant intactId="EBI-724310">
        <id>Q15038</id>
        <label>DAZAP2</label>
    </interactant>
    <organismsDiffer>false</organismsDiffer>
    <experiments>3</experiments>
</comment>
<comment type="interaction">
    <interactant intactId="EBI-7196393">
        <id>Q96PU5-5</id>
    </interactant>
    <interactant intactId="EBI-3861591">
        <id>O15105</id>
        <label>SMAD7</label>
    </interactant>
    <organismsDiffer>false</organismsDiffer>
    <experiments>3</experiments>
</comment>
<comment type="subcellular location">
    <subcellularLocation>
        <location evidence="18 23 39">Cytoplasm</location>
    </subcellularLocation>
    <subcellularLocation>
        <location evidence="36">Golgi apparatus</location>
    </subcellularLocation>
    <subcellularLocation>
        <location evidence="36">Endosome</location>
        <location evidence="36">Multivesicular body</location>
    </subcellularLocation>
    <text>May be recruited to exosomes by NDFIP1.</text>
</comment>
<comment type="alternative products">
    <event type="alternative splicing"/>
    <isoform>
        <id>Q96PU5-1</id>
        <name>1</name>
        <name>Nedd4-2c</name>
        <sequence type="displayed"/>
    </isoform>
    <isoform>
        <id>Q96PU5-2</id>
        <name>2</name>
        <sequence type="described" ref="VSP_015448"/>
    </isoform>
    <isoform>
        <id>Q96PU5-3</id>
        <name>3</name>
        <name>NEDD4Le</name>
        <sequence type="described" ref="VSP_015447"/>
    </isoform>
    <isoform>
        <id>Q96PU5-4</id>
        <name>4</name>
        <name>NEDD4La</name>
        <name>NEDD4Lb</name>
        <name>NEDD4Lf</name>
        <sequence type="described" ref="VSP_015444"/>
    </isoform>
    <isoform>
        <id>Q96PU5-5</id>
        <name>5</name>
        <name>NEDD4Ld</name>
        <sequence type="described" ref="VSP_043848"/>
    </isoform>
    <isoform>
        <id>Q96PU5-6</id>
        <name>6</name>
        <name>NEDD4Lh</name>
        <sequence type="described" ref="VSP_015446 VSP_043848"/>
    </isoform>
    <isoform>
        <id>Q96PU5-7</id>
        <name>7</name>
        <name>NEDD4Lg</name>
        <sequence type="described" ref="VSP_015446"/>
    </isoform>
    <isoform>
        <id>Q96PU5-9</id>
        <name>8</name>
        <sequence type="described" ref="VSP_015444 VSP_043848"/>
    </isoform>
</comment>
<comment type="tissue specificity">
    <text evidence="12 18 26 34">Ubiquitously expressed, with highest levels in prostate, pancreas, and kidney (PubMed:14615060, PubMed:15496141, PubMed:19664597). Expressed in melanocytes (PubMed:23999003).</text>
</comment>
<comment type="induction">
    <text evidence="12 17">By androgens in prostate, and by albumin in kidney.</text>
</comment>
<comment type="domain">
    <text evidence="7 8 11">WW domains are involved in recognizing PPxY motifs in substrate proteins.</text>
</comment>
<comment type="PTM">
    <text evidence="8 16 21 29 30">Phosphorylated by SGK1 or PKA; which impairs interaction with SCNN. Interaction with YWHAH inhibits dephosphorylation.</text>
</comment>
<comment type="PTM">
    <text evidence="25 38">Auto-ubiquitinated (PubMed:19343052). Deubiquitinated by USP36, no effect on NEDD4L protein levels. Both proteins interact and regulate each other's ubiquitination levels (PubMed:27445338).</text>
</comment>
<comment type="disease" evidence="39">
    <disease id="DI-04867">
        <name>Periventricular nodular heterotopia 7</name>
        <acronym>PVNH7</acronym>
        <description>A form of periventricular nodular heterotopia, a disorder resulting from a defect in the pattern of neuronal migration in which ectopic collections of neurons lie along the lateral ventricles of the brain or just beneath, contiguously or in isolated patches. PVNH7 is an autosomal dominant disease characterized by delayed psychomotor development, intellectual disability, and seizures in some patients. Additional features include cleft palate and toe syndactyly.</description>
        <dbReference type="MIM" id="617201"/>
    </disease>
    <text>The disease is caused by variants affecting the gene represented in this entry.</text>
</comment>
<comment type="sequence caution" evidence="50">
    <conflict type="erroneous initiation">
        <sequence resource="EMBL-CDS" id="BAA23711"/>
    </conflict>
    <text>Extended N-terminus.</text>
</comment>
<comment type="sequence caution" evidence="50">
    <conflict type="miscellaneous discrepancy">
        <sequence resource="EMBL-CDS" id="BAA23711"/>
    </conflict>
    <text>Probable cloning artifact.</text>
</comment>
<proteinExistence type="evidence at protein level"/>
<feature type="initiator methionine" description="Removed" evidence="59">
    <location>
        <position position="1"/>
    </location>
</feature>
<feature type="chain" id="PRO_0000120323" description="E3 ubiquitin-protein ligase NEDD4-like">
    <location>
        <begin position="2"/>
        <end position="975"/>
    </location>
</feature>
<feature type="domain" description="C2" evidence="2">
    <location>
        <begin position="4"/>
        <end position="126"/>
    </location>
</feature>
<feature type="domain" description="WW 1" evidence="4">
    <location>
        <begin position="193"/>
        <end position="226"/>
    </location>
</feature>
<feature type="domain" description="WW 2" evidence="4">
    <location>
        <begin position="385"/>
        <end position="418"/>
    </location>
</feature>
<feature type="domain" description="WW 3" evidence="4">
    <location>
        <begin position="497"/>
        <end position="530"/>
    </location>
</feature>
<feature type="domain" description="WW 4" evidence="4">
    <location>
        <begin position="548"/>
        <end position="581"/>
    </location>
</feature>
<feature type="domain" description="HECT" evidence="3">
    <location>
        <begin position="640"/>
        <end position="974"/>
    </location>
</feature>
<feature type="region of interest" description="Disordered" evidence="5">
    <location>
        <begin position="178"/>
        <end position="202"/>
    </location>
</feature>
<feature type="region of interest" description="Disordered" evidence="5">
    <location>
        <begin position="244"/>
        <end position="272"/>
    </location>
</feature>
<feature type="region of interest" description="Disordered" evidence="5">
    <location>
        <begin position="285"/>
        <end position="312"/>
    </location>
</feature>
<feature type="region of interest" description="Disordered" evidence="5">
    <location>
        <begin position="349"/>
        <end position="393"/>
    </location>
</feature>
<feature type="region of interest" description="Disordered" evidence="5">
    <location>
        <begin position="424"/>
        <end position="496"/>
    </location>
</feature>
<feature type="compositionally biased region" description="Basic and acidic residues" evidence="5">
    <location>
        <begin position="460"/>
        <end position="471"/>
    </location>
</feature>
<feature type="active site" description="Glycyl thioester intermediate" evidence="3">
    <location>
        <position position="942"/>
    </location>
</feature>
<feature type="modified residue" description="N-acetylalanine" evidence="59">
    <location>
        <position position="2"/>
    </location>
</feature>
<feature type="modified residue" description="Phosphoserine" evidence="60">
    <location>
        <position position="312"/>
    </location>
</feature>
<feature type="modified residue" description="Phosphothreonine" evidence="55 60">
    <location>
        <position position="318"/>
    </location>
</feature>
<feature type="modified residue" description="Phosphoserine; by WNK1 and WNK4" evidence="16 29 55">
    <location>
        <position position="342"/>
    </location>
</feature>
<feature type="modified residue" description="Phosphothreonine; by SGK1" evidence="51">
    <location>
        <position position="367"/>
    </location>
</feature>
<feature type="modified residue" description="Phosphoserine" evidence="55 56">
    <location>
        <position position="446"/>
    </location>
</feature>
<feature type="modified residue" description="Phosphoserine; by PKA and SGK1" evidence="16 21 60">
    <location>
        <position position="448"/>
    </location>
</feature>
<feature type="modified residue" description="Phosphoserine; by WNK1 and WNK4" evidence="29 55">
    <location>
        <position position="449"/>
    </location>
</feature>
<feature type="modified residue" description="Phosphoserine" evidence="55">
    <location>
        <position position="464"/>
    </location>
</feature>
<feature type="modified residue" description="Phosphoserine" evidence="60">
    <location>
        <position position="475"/>
    </location>
</feature>
<feature type="modified residue" description="Phosphoserine" evidence="54 55 57 58 60">
    <location>
        <position position="479"/>
    </location>
</feature>
<feature type="modified residue" description="Phosphoserine" evidence="57 58 60">
    <location>
        <position position="483"/>
    </location>
</feature>
<feature type="modified residue" description="Phosphoserine" evidence="55 58">
    <location>
        <position position="487"/>
    </location>
</feature>
<feature type="splice variant" id="VSP_015444" description="In isoform 4 and isoform 8." evidence="43 44 47 49">
    <location>
        <begin position="1"/>
        <end position="121"/>
    </location>
</feature>
<feature type="splice variant" id="VSP_015446" description="In isoform 6 and isoform 7." evidence="44">
    <original>MATGLGEPVYGLSEDE</original>
    <variation>MRRLAFEQ</variation>
    <location>
        <begin position="1"/>
        <end position="16"/>
    </location>
</feature>
<feature type="splice variant" id="VSP_015447" description="In isoform 3." evidence="46">
    <location>
        <begin position="356"/>
        <end position="459"/>
    </location>
</feature>
<feature type="splice variant" id="VSP_015448" description="In isoform 2." evidence="45">
    <location>
        <begin position="356"/>
        <end position="419"/>
    </location>
</feature>
<feature type="splice variant" id="VSP_043848" description="In isoform 5, isoform 6 and isoform 8." evidence="44 45 47 48 49">
    <location>
        <begin position="356"/>
        <end position="375"/>
    </location>
</feature>
<feature type="sequence variant" id="VAR_023415" description="Impaired ability to inhibit SCNN; dbSNP:rs767136811." evidence="14">
    <original>P</original>
    <variation>L</variation>
    <location>
        <position position="355"/>
    </location>
</feature>
<feature type="sequence variant" id="VAR_023416" evidence="14">
    <original>S</original>
    <variation>R</variation>
    <location>
        <position position="497"/>
    </location>
</feature>
<feature type="sequence variant" id="VAR_077880" description="In PVNH7; dbSNP:rs879255599." evidence="39">
    <original>Y</original>
    <variation>C</variation>
    <location>
        <position position="679"/>
    </location>
</feature>
<feature type="sequence variant" id="VAR_077881" description="In PVNH7; increased degradation; changed function in regulation of TOR signaling; dbSNP:rs879255598." evidence="39">
    <original>Q</original>
    <variation>H</variation>
    <location>
        <position position="694"/>
    </location>
</feature>
<feature type="sequence variant" id="VAR_077882" description="In PVNH7; increased degradation; changed function in regulation of TOR signaling; dbSNP:rs879255597." evidence="39">
    <original>E</original>
    <variation>K</variation>
    <location>
        <position position="893"/>
    </location>
</feature>
<feature type="sequence variant" id="VAR_077883" description="In PVNH7; increased degradation; changed function in regulation of TOR signaling; dbSNP:rs879255596." evidence="39">
    <original>R</original>
    <variation>Q</variation>
    <location>
        <position position="897"/>
    </location>
</feature>
<feature type="mutagenesis site" description="Abolishes interaction with 1433F." evidence="21">
    <original>S</original>
    <variation>A</variation>
    <location>
        <position position="448"/>
    </location>
</feature>
<feature type="mutagenesis site" description="Abolishes activity. No effect on USP36 protein levels." evidence="15 38">
    <original>C</original>
    <variation>S</variation>
    <location>
        <position position="942"/>
    </location>
</feature>
<feature type="sequence conflict" description="In Ref. 3; AAM76729/AAM76730." evidence="50" ref="3">
    <original>A</original>
    <variation>P</variation>
    <location>
        <position position="52"/>
    </location>
</feature>
<feature type="sequence conflict" description="In Ref. 2; AAP75706." evidence="50" ref="2">
    <original>E</original>
    <variation>K</variation>
    <location>
        <position position="188"/>
    </location>
</feature>
<feature type="strand" evidence="63">
    <location>
        <begin position="9"/>
        <end position="11"/>
    </location>
</feature>
<feature type="turn" evidence="63">
    <location>
        <begin position="16"/>
        <end position="18"/>
    </location>
</feature>
<feature type="strand" evidence="63">
    <location>
        <begin position="20"/>
        <end position="31"/>
    </location>
</feature>
<feature type="strand" evidence="63">
    <location>
        <begin position="43"/>
        <end position="51"/>
    </location>
</feature>
<feature type="turn" evidence="63">
    <location>
        <begin position="52"/>
        <end position="55"/>
    </location>
</feature>
<feature type="strand" evidence="63">
    <location>
        <begin position="56"/>
        <end position="62"/>
    </location>
</feature>
<feature type="strand" evidence="63">
    <location>
        <begin position="73"/>
        <end position="82"/>
    </location>
</feature>
<feature type="turn" evidence="63">
    <location>
        <begin position="84"/>
        <end position="86"/>
    </location>
</feature>
<feature type="strand" evidence="63">
    <location>
        <begin position="87"/>
        <end position="95"/>
    </location>
</feature>
<feature type="strand" evidence="63">
    <location>
        <begin position="98"/>
        <end position="100"/>
    </location>
</feature>
<feature type="strand" evidence="63">
    <location>
        <begin position="103"/>
        <end position="111"/>
    </location>
</feature>
<feature type="strand" evidence="63">
    <location>
        <begin position="129"/>
        <end position="132"/>
    </location>
</feature>
<feature type="strand" evidence="63">
    <location>
        <begin position="145"/>
        <end position="152"/>
    </location>
</feature>
<feature type="strand" evidence="70">
    <location>
        <begin position="199"/>
        <end position="203"/>
    </location>
</feature>
<feature type="strand" evidence="70">
    <location>
        <begin position="209"/>
        <end position="213"/>
    </location>
</feature>
<feature type="turn" evidence="70">
    <location>
        <begin position="214"/>
        <end position="217"/>
    </location>
</feature>
<feature type="strand" evidence="70">
    <location>
        <begin position="218"/>
        <end position="222"/>
    </location>
</feature>
<feature type="strand" evidence="69">
    <location>
        <begin position="391"/>
        <end position="395"/>
    </location>
</feature>
<feature type="strand" evidence="69">
    <location>
        <begin position="399"/>
        <end position="405"/>
    </location>
</feature>
<feature type="turn" evidence="69">
    <location>
        <begin position="406"/>
        <end position="409"/>
    </location>
</feature>
<feature type="strand" evidence="69">
    <location>
        <begin position="410"/>
        <end position="414"/>
    </location>
</feature>
<feature type="helix" evidence="62">
    <location>
        <begin position="417"/>
        <end position="419"/>
    </location>
</feature>
<feature type="strand" evidence="68">
    <location>
        <begin position="503"/>
        <end position="507"/>
    </location>
</feature>
<feature type="turn" evidence="61">
    <location>
        <begin position="509"/>
        <end position="511"/>
    </location>
</feature>
<feature type="strand" evidence="68">
    <location>
        <begin position="513"/>
        <end position="517"/>
    </location>
</feature>
<feature type="turn" evidence="68">
    <location>
        <begin position="518"/>
        <end position="521"/>
    </location>
</feature>
<feature type="strand" evidence="68">
    <location>
        <begin position="522"/>
        <end position="526"/>
    </location>
</feature>
<feature type="helix" evidence="68">
    <location>
        <begin position="528"/>
        <end position="531"/>
    </location>
</feature>
<feature type="turn" evidence="71">
    <location>
        <begin position="535"/>
        <end position="537"/>
    </location>
</feature>
<feature type="helix" evidence="64">
    <location>
        <begin position="594"/>
        <end position="607"/>
    </location>
</feature>
<feature type="strand" evidence="64">
    <location>
        <begin position="612"/>
        <end position="614"/>
    </location>
</feature>
<feature type="strand" evidence="64">
    <location>
        <begin position="616"/>
        <end position="622"/>
    </location>
</feature>
<feature type="helix" evidence="64">
    <location>
        <begin position="624"/>
        <end position="626"/>
    </location>
</feature>
<feature type="helix" evidence="64">
    <location>
        <begin position="627"/>
        <end position="637"/>
    </location>
</feature>
<feature type="helix" evidence="64">
    <location>
        <begin position="641"/>
        <end position="645"/>
    </location>
</feature>
<feature type="strand" evidence="64">
    <location>
        <begin position="646"/>
        <end position="652"/>
    </location>
</feature>
<feature type="strand" evidence="65">
    <location>
        <begin position="653"/>
        <end position="655"/>
    </location>
</feature>
<feature type="helix" evidence="64">
    <location>
        <begin position="660"/>
        <end position="675"/>
    </location>
</feature>
<feature type="helix" evidence="64">
    <location>
        <begin position="678"/>
        <end position="680"/>
    </location>
</feature>
<feature type="strand" evidence="64">
    <location>
        <begin position="681"/>
        <end position="687"/>
    </location>
</feature>
<feature type="turn" evidence="66">
    <location>
        <begin position="688"/>
        <end position="690"/>
    </location>
</feature>
<feature type="strand" evidence="64">
    <location>
        <begin position="693"/>
        <end position="695"/>
    </location>
</feature>
<feature type="helix" evidence="64">
    <location>
        <begin position="699"/>
        <end position="702"/>
    </location>
</feature>
<feature type="helix" evidence="64">
    <location>
        <begin position="706"/>
        <end position="723"/>
    </location>
</feature>
<feature type="strand" evidence="66">
    <location>
        <begin position="728"/>
        <end position="731"/>
    </location>
</feature>
<feature type="helix" evidence="64">
    <location>
        <begin position="733"/>
        <end position="739"/>
    </location>
</feature>
<feature type="helix" evidence="64">
    <location>
        <begin position="746"/>
        <end position="749"/>
    </location>
</feature>
<feature type="turn" evidence="64">
    <location>
        <begin position="750"/>
        <end position="752"/>
    </location>
</feature>
<feature type="helix" evidence="64">
    <location>
        <begin position="754"/>
        <end position="765"/>
    </location>
</feature>
<feature type="helix" evidence="64">
    <location>
        <begin position="769"/>
        <end position="771"/>
    </location>
</feature>
<feature type="strand" evidence="64">
    <location>
        <begin position="774"/>
        <end position="781"/>
    </location>
</feature>
<feature type="strand" evidence="64">
    <location>
        <begin position="784"/>
        <end position="791"/>
    </location>
</feature>
<feature type="helix" evidence="64">
    <location>
        <begin position="794"/>
        <end position="796"/>
    </location>
</feature>
<feature type="turn" evidence="64">
    <location>
        <begin position="801"/>
        <end position="803"/>
    </location>
</feature>
<feature type="helix" evidence="64">
    <location>
        <begin position="804"/>
        <end position="816"/>
    </location>
</feature>
<feature type="turn" evidence="64">
    <location>
        <begin position="817"/>
        <end position="819"/>
    </location>
</feature>
<feature type="helix" evidence="64">
    <location>
        <begin position="821"/>
        <end position="834"/>
    </location>
</feature>
<feature type="helix" evidence="64">
    <location>
        <begin position="837"/>
        <end position="840"/>
    </location>
</feature>
<feature type="helix" evidence="64">
    <location>
        <begin position="845"/>
        <end position="853"/>
    </location>
</feature>
<feature type="helix" evidence="64">
    <location>
        <begin position="860"/>
        <end position="865"/>
    </location>
</feature>
<feature type="strand" evidence="64">
    <location>
        <begin position="868"/>
        <end position="870"/>
    </location>
</feature>
<feature type="helix" evidence="64">
    <location>
        <begin position="878"/>
        <end position="889"/>
    </location>
</feature>
<feature type="helix" evidence="64">
    <location>
        <begin position="892"/>
        <end position="903"/>
    </location>
</feature>
<feature type="helix" evidence="64">
    <location>
        <begin position="913"/>
        <end position="915"/>
    </location>
</feature>
<feature type="strand" evidence="67">
    <location>
        <begin position="919"/>
        <end position="922"/>
    </location>
</feature>
<feature type="strand" evidence="64">
    <location>
        <begin position="926"/>
        <end position="929"/>
    </location>
</feature>
<feature type="strand" evidence="66">
    <location>
        <begin position="933"/>
        <end position="935"/>
    </location>
</feature>
<feature type="strand" evidence="64">
    <location>
        <begin position="938"/>
        <end position="940"/>
    </location>
</feature>
<feature type="helix" evidence="64">
    <location>
        <begin position="941"/>
        <end position="943"/>
    </location>
</feature>
<feature type="strand" evidence="64">
    <location>
        <begin position="945"/>
        <end position="948"/>
    </location>
</feature>
<feature type="helix" evidence="64">
    <location>
        <begin position="954"/>
        <end position="965"/>
    </location>
</feature>
<organism>
    <name type="scientific">Homo sapiens</name>
    <name type="common">Human</name>
    <dbReference type="NCBI Taxonomy" id="9606"/>
    <lineage>
        <taxon>Eukaryota</taxon>
        <taxon>Metazoa</taxon>
        <taxon>Chordata</taxon>
        <taxon>Craniata</taxon>
        <taxon>Vertebrata</taxon>
        <taxon>Euteleostomi</taxon>
        <taxon>Mammalia</taxon>
        <taxon>Eutheria</taxon>
        <taxon>Euarchontoglires</taxon>
        <taxon>Primates</taxon>
        <taxon>Haplorrhini</taxon>
        <taxon>Catarrhini</taxon>
        <taxon>Hominidae</taxon>
        <taxon>Homo</taxon>
    </lineage>
</organism>